<gene>
    <name evidence="47" type="primary">CRB1</name>
</gene>
<organism>
    <name type="scientific">Homo sapiens</name>
    <name type="common">Human</name>
    <dbReference type="NCBI Taxonomy" id="9606"/>
    <lineage>
        <taxon>Eukaryota</taxon>
        <taxon>Metazoa</taxon>
        <taxon>Chordata</taxon>
        <taxon>Craniata</taxon>
        <taxon>Vertebrata</taxon>
        <taxon>Euteleostomi</taxon>
        <taxon>Mammalia</taxon>
        <taxon>Eutheria</taxon>
        <taxon>Euarchontoglires</taxon>
        <taxon>Primates</taxon>
        <taxon>Haplorrhini</taxon>
        <taxon>Catarrhini</taxon>
        <taxon>Hominidae</taxon>
        <taxon>Homo</taxon>
    </lineage>
</organism>
<evidence type="ECO:0000250" key="1"/>
<evidence type="ECO:0000250" key="2">
    <source>
        <dbReference type="UniProtKB" id="Q8VHS2"/>
    </source>
</evidence>
<evidence type="ECO:0000255" key="3"/>
<evidence type="ECO:0000255" key="4">
    <source>
        <dbReference type="PROSITE-ProRule" id="PRU00076"/>
    </source>
</evidence>
<evidence type="ECO:0000255" key="5">
    <source>
        <dbReference type="PROSITE-ProRule" id="PRU00122"/>
    </source>
</evidence>
<evidence type="ECO:0000269" key="6">
    <source>
    </source>
</evidence>
<evidence type="ECO:0000269" key="7">
    <source>
    </source>
</evidence>
<evidence type="ECO:0000269" key="8">
    <source>
    </source>
</evidence>
<evidence type="ECO:0000269" key="9">
    <source>
    </source>
</evidence>
<evidence type="ECO:0000269" key="10">
    <source>
    </source>
</evidence>
<evidence type="ECO:0000269" key="11">
    <source>
    </source>
</evidence>
<evidence type="ECO:0000269" key="12">
    <source>
    </source>
</evidence>
<evidence type="ECO:0000269" key="13">
    <source>
    </source>
</evidence>
<evidence type="ECO:0000269" key="14">
    <source>
    </source>
</evidence>
<evidence type="ECO:0000269" key="15">
    <source>
    </source>
</evidence>
<evidence type="ECO:0000269" key="16">
    <source>
    </source>
</evidence>
<evidence type="ECO:0000269" key="17">
    <source>
    </source>
</evidence>
<evidence type="ECO:0000269" key="18">
    <source>
    </source>
</evidence>
<evidence type="ECO:0000269" key="19">
    <source>
    </source>
</evidence>
<evidence type="ECO:0000269" key="20">
    <source>
    </source>
</evidence>
<evidence type="ECO:0000269" key="21">
    <source>
    </source>
</evidence>
<evidence type="ECO:0000269" key="22">
    <source>
    </source>
</evidence>
<evidence type="ECO:0000269" key="23">
    <source>
    </source>
</evidence>
<evidence type="ECO:0000269" key="24">
    <source>
    </source>
</evidence>
<evidence type="ECO:0000269" key="25">
    <source>
    </source>
</evidence>
<evidence type="ECO:0000269" key="26">
    <source>
    </source>
</evidence>
<evidence type="ECO:0000269" key="27">
    <source>
    </source>
</evidence>
<evidence type="ECO:0000269" key="28">
    <source>
    </source>
</evidence>
<evidence type="ECO:0000269" key="29">
    <source>
    </source>
</evidence>
<evidence type="ECO:0000269" key="30">
    <source>
    </source>
</evidence>
<evidence type="ECO:0000269" key="31">
    <source>
    </source>
</evidence>
<evidence type="ECO:0000269" key="32">
    <source>
    </source>
</evidence>
<evidence type="ECO:0000269" key="33">
    <source>
    </source>
</evidence>
<evidence type="ECO:0000269" key="34">
    <source>
    </source>
</evidence>
<evidence type="ECO:0000269" key="35">
    <source>
    </source>
</evidence>
<evidence type="ECO:0000269" key="36">
    <source>
    </source>
</evidence>
<evidence type="ECO:0000269" key="37">
    <source>
    </source>
</evidence>
<evidence type="ECO:0000269" key="38">
    <source>
    </source>
</evidence>
<evidence type="ECO:0000269" key="39">
    <source>
    </source>
</evidence>
<evidence type="ECO:0000269" key="40">
    <source>
    </source>
</evidence>
<evidence type="ECO:0000303" key="41">
    <source>
    </source>
</evidence>
<evidence type="ECO:0000303" key="42">
    <source>
    </source>
</evidence>
<evidence type="ECO:0000303" key="43">
    <source>
    </source>
</evidence>
<evidence type="ECO:0000303" key="44">
    <source>
    </source>
</evidence>
<evidence type="ECO:0000303" key="45">
    <source>
    </source>
</evidence>
<evidence type="ECO:0000305" key="46"/>
<evidence type="ECO:0000312" key="47">
    <source>
        <dbReference type="HGNC" id="HGNC:2343"/>
    </source>
</evidence>
<evidence type="ECO:0007829" key="48">
    <source>
        <dbReference type="PDB" id="4UU5"/>
    </source>
</evidence>
<dbReference type="EMBL" id="AF154671">
    <property type="protein sequence ID" value="AAF01361.1"/>
    <property type="molecule type" value="mRNA"/>
</dbReference>
<dbReference type="EMBL" id="AY043323">
    <property type="protein sequence ID" value="AAL10680.1"/>
    <property type="molecule type" value="mRNA"/>
</dbReference>
<dbReference type="EMBL" id="AY043324">
    <property type="protein sequence ID" value="AAL10681.1"/>
    <property type="molecule type" value="mRNA"/>
</dbReference>
<dbReference type="EMBL" id="AY043325">
    <property type="protein sequence ID" value="AAL10682.1"/>
    <property type="molecule type" value="mRNA"/>
</dbReference>
<dbReference type="EMBL" id="AJ748821">
    <property type="protein sequence ID" value="CAG38658.1"/>
    <property type="molecule type" value="mRNA"/>
</dbReference>
<dbReference type="EMBL" id="BX640729">
    <property type="protein sequence ID" value="CAE45845.1"/>
    <property type="status" value="ALT_SEQ"/>
    <property type="molecule type" value="mRNA"/>
</dbReference>
<dbReference type="EMBL" id="AK299368">
    <property type="protein sequence ID" value="BAH13018.1"/>
    <property type="molecule type" value="mRNA"/>
</dbReference>
<dbReference type="EMBL" id="AL136322">
    <property type="status" value="NOT_ANNOTATED_CDS"/>
    <property type="molecule type" value="Genomic_DNA"/>
</dbReference>
<dbReference type="EMBL" id="AL139136">
    <property type="status" value="NOT_ANNOTATED_CDS"/>
    <property type="molecule type" value="Genomic_DNA"/>
</dbReference>
<dbReference type="EMBL" id="AL513325">
    <property type="status" value="NOT_ANNOTATED_CDS"/>
    <property type="molecule type" value="Genomic_DNA"/>
</dbReference>
<dbReference type="EMBL" id="AL356315">
    <property type="status" value="NOT_ANNOTATED_CDS"/>
    <property type="molecule type" value="Genomic_DNA"/>
</dbReference>
<dbReference type="EMBL" id="CH471067">
    <property type="protein sequence ID" value="EAW91277.1"/>
    <property type="molecule type" value="Genomic_DNA"/>
</dbReference>
<dbReference type="EMBL" id="BC136271">
    <property type="protein sequence ID" value="AAI36272.1"/>
    <property type="molecule type" value="mRNA"/>
</dbReference>
<dbReference type="CCDS" id="CCDS1390.1">
    <molecule id="P82279-1"/>
</dbReference>
<dbReference type="CCDS" id="CCDS53454.1">
    <molecule id="P82279-3"/>
</dbReference>
<dbReference type="CCDS" id="CCDS58052.1">
    <molecule id="P82279-5"/>
</dbReference>
<dbReference type="RefSeq" id="NP_001180569.1">
    <molecule id="P82279-3"/>
    <property type="nucleotide sequence ID" value="NM_001193640.2"/>
</dbReference>
<dbReference type="RefSeq" id="NP_001244894.1">
    <property type="nucleotide sequence ID" value="NM_001257965.1"/>
</dbReference>
<dbReference type="RefSeq" id="NP_001244895.1">
    <molecule id="P82279-5"/>
    <property type="nucleotide sequence ID" value="NM_001257966.2"/>
</dbReference>
<dbReference type="RefSeq" id="NP_957705.1">
    <molecule id="P82279-1"/>
    <property type="nucleotide sequence ID" value="NM_201253.3"/>
</dbReference>
<dbReference type="PDB" id="4UU5">
    <property type="method" value="X-ray"/>
    <property type="resolution" value="1.23 A"/>
    <property type="chains" value="B=1390-1406"/>
</dbReference>
<dbReference type="PDBsum" id="4UU5"/>
<dbReference type="SMR" id="P82279"/>
<dbReference type="BioGRID" id="116990">
    <property type="interactions" value="9"/>
</dbReference>
<dbReference type="ComplexPortal" id="CPX-6167">
    <property type="entry name" value="CRUMBS1-PALS1-PATJ cell polarity complex"/>
</dbReference>
<dbReference type="CORUM" id="P82279"/>
<dbReference type="FunCoup" id="P82279">
    <property type="interactions" value="342"/>
</dbReference>
<dbReference type="IntAct" id="P82279">
    <property type="interactions" value="12"/>
</dbReference>
<dbReference type="MINT" id="P82279"/>
<dbReference type="STRING" id="9606.ENSP00000356370"/>
<dbReference type="TCDB" id="9.B.87.1.29">
    <property type="family name" value="the selenoprotein p receptor (selp-receptor) family"/>
</dbReference>
<dbReference type="GlyCosmos" id="P82279">
    <property type="glycosylation" value="23 sites, No reported glycans"/>
</dbReference>
<dbReference type="GlyGen" id="P82279">
    <property type="glycosylation" value="28 sites, 1 O-linked glycan (4 sites)"/>
</dbReference>
<dbReference type="iPTMnet" id="P82279"/>
<dbReference type="PhosphoSitePlus" id="P82279"/>
<dbReference type="BioMuta" id="CRB1"/>
<dbReference type="DMDM" id="71153499"/>
<dbReference type="MassIVE" id="P82279"/>
<dbReference type="PaxDb" id="9606-ENSP00000356370"/>
<dbReference type="PeptideAtlas" id="P82279"/>
<dbReference type="ProteomicsDB" id="57705">
    <molecule id="P82279-1"/>
</dbReference>
<dbReference type="ProteomicsDB" id="57706">
    <molecule id="P82279-2"/>
</dbReference>
<dbReference type="ProteomicsDB" id="57707">
    <molecule id="P82279-3"/>
</dbReference>
<dbReference type="ProteomicsDB" id="57708">
    <molecule id="P82279-4"/>
</dbReference>
<dbReference type="Antibodypedia" id="34478">
    <property type="antibodies" value="66 antibodies from 24 providers"/>
</dbReference>
<dbReference type="DNASU" id="23418"/>
<dbReference type="Ensembl" id="ENST00000367399.6">
    <molecule id="P82279-3"/>
    <property type="protein sequence ID" value="ENSP00000356369.2"/>
    <property type="gene ID" value="ENSG00000134376.17"/>
</dbReference>
<dbReference type="Ensembl" id="ENST00000367400.8">
    <molecule id="P82279-1"/>
    <property type="protein sequence ID" value="ENSP00000356370.3"/>
    <property type="gene ID" value="ENSG00000134376.17"/>
</dbReference>
<dbReference type="Ensembl" id="ENST00000484075.5">
    <molecule id="P82279-2"/>
    <property type="protein sequence ID" value="ENSP00000433932.1"/>
    <property type="gene ID" value="ENSG00000134376.17"/>
</dbReference>
<dbReference type="Ensembl" id="ENST00000538660.5">
    <molecule id="P82279-5"/>
    <property type="protein sequence ID" value="ENSP00000438091.1"/>
    <property type="gene ID" value="ENSG00000134376.17"/>
</dbReference>
<dbReference type="Ensembl" id="ENST00000638467.1">
    <molecule id="P82279-2"/>
    <property type="protein sequence ID" value="ENSP00000491102.1"/>
    <property type="gene ID" value="ENSG00000134376.17"/>
</dbReference>
<dbReference type="GeneID" id="23418"/>
<dbReference type="KEGG" id="hsa:23418"/>
<dbReference type="MANE-Select" id="ENST00000367400.8">
    <property type="protein sequence ID" value="ENSP00000356370.3"/>
    <property type="RefSeq nucleotide sequence ID" value="NM_201253.3"/>
    <property type="RefSeq protein sequence ID" value="NP_957705.1"/>
</dbReference>
<dbReference type="UCSC" id="uc001gtz.4">
    <molecule id="P82279-1"/>
    <property type="organism name" value="human"/>
</dbReference>
<dbReference type="AGR" id="HGNC:2343"/>
<dbReference type="CTD" id="23418"/>
<dbReference type="DisGeNET" id="23418"/>
<dbReference type="GeneCards" id="CRB1"/>
<dbReference type="GeneReviews" id="CRB1"/>
<dbReference type="HGNC" id="HGNC:2343">
    <property type="gene designation" value="CRB1"/>
</dbReference>
<dbReference type="HPA" id="ENSG00000134376">
    <property type="expression patterns" value="Tissue enriched (retina)"/>
</dbReference>
<dbReference type="MalaCards" id="CRB1"/>
<dbReference type="MIM" id="172870">
    <property type="type" value="phenotype"/>
</dbReference>
<dbReference type="MIM" id="600105">
    <property type="type" value="phenotype"/>
</dbReference>
<dbReference type="MIM" id="604210">
    <property type="type" value="gene"/>
</dbReference>
<dbReference type="MIM" id="613835">
    <property type="type" value="phenotype"/>
</dbReference>
<dbReference type="neXtProt" id="NX_P82279"/>
<dbReference type="OpenTargets" id="ENSG00000134376"/>
<dbReference type="Orphanet" id="65">
    <property type="disease" value="Leber congenital amaurosis"/>
</dbReference>
<dbReference type="Orphanet" id="35612">
    <property type="disease" value="Nanophthalmos"/>
</dbReference>
<dbReference type="Orphanet" id="251295">
    <property type="disease" value="Pigmented paravenous retinochoroidal atrophy"/>
</dbReference>
<dbReference type="Orphanet" id="791">
    <property type="disease" value="Retinitis pigmentosa"/>
</dbReference>
<dbReference type="PharmGKB" id="PA26863"/>
<dbReference type="VEuPathDB" id="HostDB:ENSG00000134376"/>
<dbReference type="eggNOG" id="KOG1217">
    <property type="taxonomic scope" value="Eukaryota"/>
</dbReference>
<dbReference type="GeneTree" id="ENSGT00940000155152"/>
<dbReference type="HOGENOM" id="CLU_391592_0_0_1"/>
<dbReference type="InParanoid" id="P82279"/>
<dbReference type="OMA" id="RDMFIML"/>
<dbReference type="OrthoDB" id="283575at2759"/>
<dbReference type="PAN-GO" id="P82279">
    <property type="GO annotations" value="4 GO annotations based on evolutionary models"/>
</dbReference>
<dbReference type="PhylomeDB" id="P82279"/>
<dbReference type="TreeFam" id="TF316224"/>
<dbReference type="PathwayCommons" id="P82279"/>
<dbReference type="SignaLink" id="P82279"/>
<dbReference type="BioGRID-ORCS" id="23418">
    <property type="hits" value="6 hits in 1135 CRISPR screens"/>
</dbReference>
<dbReference type="ChiTaRS" id="CRB1">
    <property type="organism name" value="human"/>
</dbReference>
<dbReference type="EvolutionaryTrace" id="P82279"/>
<dbReference type="GeneWiki" id="CRB1"/>
<dbReference type="GenomeRNAi" id="23418"/>
<dbReference type="Pharos" id="P82279">
    <property type="development level" value="Tbio"/>
</dbReference>
<dbReference type="PRO" id="PR:P82279"/>
<dbReference type="Proteomes" id="UP000005640">
    <property type="component" value="Chromosome 1"/>
</dbReference>
<dbReference type="RNAct" id="P82279">
    <property type="molecule type" value="protein"/>
</dbReference>
<dbReference type="Bgee" id="ENSG00000134376">
    <property type="expression patterns" value="Expressed in ganglionic eminence and 118 other cell types or tissues"/>
</dbReference>
<dbReference type="ExpressionAtlas" id="P82279">
    <property type="expression patterns" value="baseline and differential"/>
</dbReference>
<dbReference type="GO" id="GO:0005912">
    <property type="term" value="C:adherens junction"/>
    <property type="evidence" value="ECO:0000314"/>
    <property type="project" value="UniProtKB"/>
</dbReference>
<dbReference type="GO" id="GO:0043296">
    <property type="term" value="C:apical junction complex"/>
    <property type="evidence" value="ECO:0000303"/>
    <property type="project" value="ComplexPortal"/>
</dbReference>
<dbReference type="GO" id="GO:0016324">
    <property type="term" value="C:apical plasma membrane"/>
    <property type="evidence" value="ECO:0000303"/>
    <property type="project" value="ComplexPortal"/>
</dbReference>
<dbReference type="GO" id="GO:0005576">
    <property type="term" value="C:extracellular region"/>
    <property type="evidence" value="ECO:0007669"/>
    <property type="project" value="UniProtKB-SubCell"/>
</dbReference>
<dbReference type="GO" id="GO:0097386">
    <property type="term" value="C:glial cell projection"/>
    <property type="evidence" value="ECO:0007669"/>
    <property type="project" value="Ensembl"/>
</dbReference>
<dbReference type="GO" id="GO:0005902">
    <property type="term" value="C:microvillus"/>
    <property type="evidence" value="ECO:0007669"/>
    <property type="project" value="Ensembl"/>
</dbReference>
<dbReference type="GO" id="GO:0001917">
    <property type="term" value="C:photoreceptor inner segment"/>
    <property type="evidence" value="ECO:0007669"/>
    <property type="project" value="UniProtKB-SubCell"/>
</dbReference>
<dbReference type="GO" id="GO:0001750">
    <property type="term" value="C:photoreceptor outer segment"/>
    <property type="evidence" value="ECO:0007669"/>
    <property type="project" value="UniProtKB-SubCell"/>
</dbReference>
<dbReference type="GO" id="GO:0005886">
    <property type="term" value="C:plasma membrane"/>
    <property type="evidence" value="ECO:0000318"/>
    <property type="project" value="GO_Central"/>
</dbReference>
<dbReference type="GO" id="GO:0032991">
    <property type="term" value="C:protein-containing complex"/>
    <property type="evidence" value="ECO:0000314"/>
    <property type="project" value="UniProtKB"/>
</dbReference>
<dbReference type="GO" id="GO:0035003">
    <property type="term" value="C:subapical complex"/>
    <property type="evidence" value="ECO:0007669"/>
    <property type="project" value="Ensembl"/>
</dbReference>
<dbReference type="GO" id="GO:0005509">
    <property type="term" value="F:calcium ion binding"/>
    <property type="evidence" value="ECO:0007669"/>
    <property type="project" value="InterPro"/>
</dbReference>
<dbReference type="GO" id="GO:0001974">
    <property type="term" value="P:blood vessel remodeling"/>
    <property type="evidence" value="ECO:0007669"/>
    <property type="project" value="Ensembl"/>
</dbReference>
<dbReference type="GO" id="GO:0007267">
    <property type="term" value="P:cell-cell signaling"/>
    <property type="evidence" value="ECO:0000304"/>
    <property type="project" value="ProtInc"/>
</dbReference>
<dbReference type="GO" id="GO:0071482">
    <property type="term" value="P:cellular response to light stimulus"/>
    <property type="evidence" value="ECO:0007669"/>
    <property type="project" value="Ensembl"/>
</dbReference>
<dbReference type="GO" id="GO:0050908">
    <property type="term" value="P:detection of light stimulus involved in visual perception"/>
    <property type="evidence" value="ECO:0007669"/>
    <property type="project" value="Ensembl"/>
</dbReference>
<dbReference type="GO" id="GO:0061159">
    <property type="term" value="P:establishment of bipolar cell polarity involved in cell morphogenesis"/>
    <property type="evidence" value="ECO:0007669"/>
    <property type="project" value="Ensembl"/>
</dbReference>
<dbReference type="GO" id="GO:0007163">
    <property type="term" value="P:establishment or maintenance of cell polarity"/>
    <property type="evidence" value="ECO:0000304"/>
    <property type="project" value="ProtInc"/>
</dbReference>
<dbReference type="GO" id="GO:0045197">
    <property type="term" value="P:establishment or maintenance of epithelial cell apical/basal polarity"/>
    <property type="evidence" value="ECO:0000318"/>
    <property type="project" value="GO_Central"/>
</dbReference>
<dbReference type="GO" id="GO:0042462">
    <property type="term" value="P:eye photoreceptor cell development"/>
    <property type="evidence" value="ECO:0007669"/>
    <property type="project" value="Ensembl"/>
</dbReference>
<dbReference type="GO" id="GO:0010467">
    <property type="term" value="P:gene expression"/>
    <property type="evidence" value="ECO:0007669"/>
    <property type="project" value="Ensembl"/>
</dbReference>
<dbReference type="GO" id="GO:0010001">
    <property type="term" value="P:glial cell differentiation"/>
    <property type="evidence" value="ECO:0007669"/>
    <property type="project" value="Ensembl"/>
</dbReference>
<dbReference type="GO" id="GO:0007157">
    <property type="term" value="P:heterophilic cell-cell adhesion via plasma membrane cell adhesion molecules"/>
    <property type="evidence" value="ECO:0000318"/>
    <property type="project" value="GO_Central"/>
</dbReference>
<dbReference type="GO" id="GO:0045494">
    <property type="term" value="P:photoreceptor cell maintenance"/>
    <property type="evidence" value="ECO:0007669"/>
    <property type="project" value="Ensembl"/>
</dbReference>
<dbReference type="GO" id="GO:0035845">
    <property type="term" value="P:photoreceptor cell outer segment organization"/>
    <property type="evidence" value="ECO:0007669"/>
    <property type="project" value="Ensembl"/>
</dbReference>
<dbReference type="GO" id="GO:0007009">
    <property type="term" value="P:plasma membrane organization"/>
    <property type="evidence" value="ECO:0007669"/>
    <property type="project" value="Ensembl"/>
</dbReference>
<dbReference type="GO" id="GO:0060060">
    <property type="term" value="P:post-embryonic retina morphogenesis in camera-type eye"/>
    <property type="evidence" value="ECO:0007669"/>
    <property type="project" value="Ensembl"/>
</dbReference>
<dbReference type="GO" id="GO:0008104">
    <property type="term" value="P:protein localization"/>
    <property type="evidence" value="ECO:0007669"/>
    <property type="project" value="Ensembl"/>
</dbReference>
<dbReference type="GO" id="GO:0010842">
    <property type="term" value="P:retina layer formation"/>
    <property type="evidence" value="ECO:0007669"/>
    <property type="project" value="Ensembl"/>
</dbReference>
<dbReference type="CDD" id="cd00054">
    <property type="entry name" value="EGF_CA"/>
    <property type="match status" value="15"/>
</dbReference>
<dbReference type="CDD" id="cd00110">
    <property type="entry name" value="LamG"/>
    <property type="match status" value="3"/>
</dbReference>
<dbReference type="FunFam" id="2.10.25.10:FF:000348">
    <property type="entry name" value="Crumbs 1, cell polarity complex component"/>
    <property type="match status" value="1"/>
</dbReference>
<dbReference type="FunFam" id="2.10.25.10:FF:000484">
    <property type="entry name" value="Crumbs 1, cell polarity complex component"/>
    <property type="match status" value="1"/>
</dbReference>
<dbReference type="FunFam" id="2.10.25.10:FF:000517">
    <property type="entry name" value="Crumbs 1, cell polarity complex component"/>
    <property type="match status" value="1"/>
</dbReference>
<dbReference type="FunFam" id="2.60.120.200:FF:000081">
    <property type="entry name" value="Crumbs 1, cell polarity complex component"/>
    <property type="match status" value="1"/>
</dbReference>
<dbReference type="FunFam" id="2.10.25.10:FF:000208">
    <property type="entry name" value="Crumbs 2, cell polarity complex component"/>
    <property type="match status" value="1"/>
</dbReference>
<dbReference type="FunFam" id="2.10.25.10:FF:000039">
    <property type="entry name" value="Crumbs cell polarity complex component 1"/>
    <property type="match status" value="5"/>
</dbReference>
<dbReference type="FunFam" id="2.10.25.10:FF:000274">
    <property type="entry name" value="Crumbs cell polarity complex component 1"/>
    <property type="match status" value="1"/>
</dbReference>
<dbReference type="FunFam" id="2.10.25.10:FF:000400">
    <property type="entry name" value="Crumbs cell polarity complex component 1"/>
    <property type="match status" value="1"/>
</dbReference>
<dbReference type="FunFam" id="2.10.25.10:FF:000413">
    <property type="entry name" value="Crumbs cell polarity complex component 1"/>
    <property type="match status" value="1"/>
</dbReference>
<dbReference type="FunFam" id="2.10.25.10:FF:000468">
    <property type="entry name" value="Crumbs cell polarity complex component 1"/>
    <property type="match status" value="1"/>
</dbReference>
<dbReference type="FunFam" id="2.60.120.200:FF:000055">
    <property type="entry name" value="Crumbs cell polarity complex component 1"/>
    <property type="match status" value="1"/>
</dbReference>
<dbReference type="FunFam" id="2.60.120.200:FF:000090">
    <property type="entry name" value="Crumbs cell polarity complex component 1"/>
    <property type="match status" value="1"/>
</dbReference>
<dbReference type="FunFam" id="2.10.25.10:FF:000123">
    <property type="entry name" value="Crumbs homolog 1 (Drosophila)"/>
    <property type="match status" value="2"/>
</dbReference>
<dbReference type="FunFam" id="2.10.25.10:FF:000252">
    <property type="entry name" value="Crumbs homolog 1 (Drosophila)"/>
    <property type="match status" value="1"/>
</dbReference>
<dbReference type="FunFam" id="2.10.25.10:FF:000391">
    <property type="entry name" value="Weary, isoform C"/>
    <property type="match status" value="1"/>
</dbReference>
<dbReference type="Gene3D" id="2.60.120.200">
    <property type="match status" value="3"/>
</dbReference>
<dbReference type="Gene3D" id="2.10.25.10">
    <property type="entry name" value="Laminin"/>
    <property type="match status" value="17"/>
</dbReference>
<dbReference type="InterPro" id="IPR013320">
    <property type="entry name" value="ConA-like_dom_sf"/>
</dbReference>
<dbReference type="InterPro" id="IPR001881">
    <property type="entry name" value="EGF-like_Ca-bd_dom"/>
</dbReference>
<dbReference type="InterPro" id="IPR013032">
    <property type="entry name" value="EGF-like_CS"/>
</dbReference>
<dbReference type="InterPro" id="IPR000742">
    <property type="entry name" value="EGF-like_dom"/>
</dbReference>
<dbReference type="InterPro" id="IPR000152">
    <property type="entry name" value="EGF-type_Asp/Asn_hydroxyl_site"/>
</dbReference>
<dbReference type="InterPro" id="IPR018097">
    <property type="entry name" value="EGF_Ca-bd_CS"/>
</dbReference>
<dbReference type="InterPro" id="IPR009030">
    <property type="entry name" value="Growth_fac_rcpt_cys_sf"/>
</dbReference>
<dbReference type="InterPro" id="IPR001791">
    <property type="entry name" value="Laminin_G"/>
</dbReference>
<dbReference type="PANTHER" id="PTHR12916">
    <property type="entry name" value="CYTOCHROME C OXIDASE POLYPEPTIDE VIC-2"/>
    <property type="match status" value="1"/>
</dbReference>
<dbReference type="PANTHER" id="PTHR12916:SF4">
    <property type="entry name" value="UNINFLATABLE, ISOFORM C"/>
    <property type="match status" value="1"/>
</dbReference>
<dbReference type="Pfam" id="PF00008">
    <property type="entry name" value="EGF"/>
    <property type="match status" value="14"/>
</dbReference>
<dbReference type="Pfam" id="PF12661">
    <property type="entry name" value="hEGF"/>
    <property type="match status" value="3"/>
</dbReference>
<dbReference type="Pfam" id="PF02210">
    <property type="entry name" value="Laminin_G_2"/>
    <property type="match status" value="3"/>
</dbReference>
<dbReference type="PRINTS" id="PR00010">
    <property type="entry name" value="EGFBLOOD"/>
</dbReference>
<dbReference type="PRINTS" id="PR01983">
    <property type="entry name" value="NOTCH"/>
</dbReference>
<dbReference type="SMART" id="SM00181">
    <property type="entry name" value="EGF"/>
    <property type="match status" value="18"/>
</dbReference>
<dbReference type="SMART" id="SM00179">
    <property type="entry name" value="EGF_CA"/>
    <property type="match status" value="16"/>
</dbReference>
<dbReference type="SMART" id="SM00282">
    <property type="entry name" value="LamG"/>
    <property type="match status" value="3"/>
</dbReference>
<dbReference type="SUPFAM" id="SSF49899">
    <property type="entry name" value="Concanavalin A-like lectins/glucanases"/>
    <property type="match status" value="3"/>
</dbReference>
<dbReference type="SUPFAM" id="SSF57196">
    <property type="entry name" value="EGF/Laminin"/>
    <property type="match status" value="8"/>
</dbReference>
<dbReference type="SUPFAM" id="SSF57184">
    <property type="entry name" value="Growth factor receptor domain"/>
    <property type="match status" value="2"/>
</dbReference>
<dbReference type="PROSITE" id="PS00010">
    <property type="entry name" value="ASX_HYDROXYL"/>
    <property type="match status" value="10"/>
</dbReference>
<dbReference type="PROSITE" id="PS00022">
    <property type="entry name" value="EGF_1"/>
    <property type="match status" value="15"/>
</dbReference>
<dbReference type="PROSITE" id="PS01186">
    <property type="entry name" value="EGF_2"/>
    <property type="match status" value="11"/>
</dbReference>
<dbReference type="PROSITE" id="PS50026">
    <property type="entry name" value="EGF_3"/>
    <property type="match status" value="19"/>
</dbReference>
<dbReference type="PROSITE" id="PS01187">
    <property type="entry name" value="EGF_CA"/>
    <property type="match status" value="7"/>
</dbReference>
<dbReference type="PROSITE" id="PS50025">
    <property type="entry name" value="LAM_G_DOMAIN"/>
    <property type="match status" value="3"/>
</dbReference>
<keyword id="KW-0002">3D-structure</keyword>
<keyword id="KW-0025">Alternative splicing</keyword>
<keyword id="KW-0106">Calcium</keyword>
<keyword id="KW-1003">Cell membrane</keyword>
<keyword id="KW-0966">Cell projection</keyword>
<keyword id="KW-0225">Disease variant</keyword>
<keyword id="KW-1015">Disulfide bond</keyword>
<keyword id="KW-0245">EGF-like domain</keyword>
<keyword id="KW-0325">Glycoprotein</keyword>
<keyword id="KW-0901">Leber congenital amaurosis</keyword>
<keyword id="KW-0472">Membrane</keyword>
<keyword id="KW-1267">Proteomics identification</keyword>
<keyword id="KW-1185">Reference proteome</keyword>
<keyword id="KW-0677">Repeat</keyword>
<keyword id="KW-0682">Retinitis pigmentosa</keyword>
<keyword id="KW-0964">Secreted</keyword>
<keyword id="KW-0732">Signal</keyword>
<keyword id="KW-0812">Transmembrane</keyword>
<keyword id="KW-1133">Transmembrane helix</keyword>
<accession>P82279</accession>
<accession>A2A308</accession>
<accession>B7Z5T2</accession>
<accession>B9EG71</accession>
<accession>Q5K3A6</accession>
<accession>Q5TC28</accession>
<accession>Q5VUT1</accession>
<accession>Q6N027</accession>
<accession>Q8WWY0</accession>
<accession>Q8WWY1</accession>
<reference key="1">
    <citation type="journal article" date="1999" name="Nat. Genet.">
        <title>Mutations in a human homologue of Drosophila crumbs cause retinitis pigmentosa (RP12).</title>
        <authorList>
            <person name="den Hollander A.I."/>
            <person name="ten Brink J.B."/>
            <person name="de Kok Y.J.M."/>
            <person name="van Soest S."/>
            <person name="van den Born L.I."/>
            <person name="van Driel M.A."/>
            <person name="van de Pol D.J.R."/>
            <person name="Payne A.M."/>
            <person name="Bhattacharya S.S."/>
            <person name="Kellner U."/>
            <person name="Hoyng C.B."/>
            <person name="Westerveld A."/>
            <person name="Brunner H.G."/>
            <person name="Bleeker-Wagemakers E.M."/>
            <person name="Deutman A.F."/>
            <person name="Heckenlively J.R."/>
            <person name="Cremers F.P.M."/>
            <person name="Bergen A.A.B."/>
        </authorList>
    </citation>
    <scope>NUCLEOTIDE SEQUENCE [MRNA] (ISOFORM 2)</scope>
    <scope>VARIANTS RP12 VAL-161; TRP-250; MET-745; CYS-764; TYR-948; THR-1041 AND PRO-1071</scope>
    <source>
        <tissue>Fetal brain</tissue>
        <tissue>Retina</tissue>
    </source>
</reference>
<reference key="2">
    <citation type="journal article" date="2001" name="Hum. Mol. Genet.">
        <title>CRB1 has a cytoplasmic domain that is functionally conserved between human and Drosophila.</title>
        <authorList>
            <person name="den Hollander A.I."/>
            <person name="Johnson K."/>
            <person name="de Kok Y.J.M."/>
            <person name="Klebes A."/>
            <person name="Brunner H.G."/>
            <person name="Knust E."/>
            <person name="Cremers F.P.M."/>
        </authorList>
    </citation>
    <scope>NUCLEOTIDE SEQUENCE [MRNA] (ISOFORMS 1 AND 2)</scope>
</reference>
<reference key="3">
    <citation type="journal article" date="2005" name="Invest. Ophthalmol. Vis. Sci.">
        <title>MPP5 recruits MPP4 to the CRB1 complex in photoreceptors.</title>
        <authorList>
            <person name="Kantardzhieva A."/>
            <person name="Gosens I."/>
            <person name="Alexeeva S."/>
            <person name="Punte I.M."/>
            <person name="Versteeg I."/>
            <person name="Krieger E."/>
            <person name="Neefjes-Mol C.A."/>
            <person name="den Hollander A.I."/>
            <person name="Letteboer S.J.F."/>
            <person name="Klooster J."/>
            <person name="Cremers F.P.M."/>
            <person name="Roepman R."/>
            <person name="Wijnholds J."/>
        </authorList>
    </citation>
    <scope>NUCLEOTIDE SEQUENCE [MRNA] (ISOFORM 3)</scope>
    <scope>IDENTIFICATION IN COMPLEX WITH MPP4 AND PALS1</scope>
    <scope>TISSUE SPECIFICITY</scope>
    <scope>GLYCOSYLATION</scope>
    <source>
        <tissue>Retina</tissue>
    </source>
</reference>
<reference key="4">
    <citation type="journal article" date="2007" name="BMC Genomics">
        <title>The full-ORF clone resource of the German cDNA consortium.</title>
        <authorList>
            <person name="Bechtel S."/>
            <person name="Rosenfelder H."/>
            <person name="Duda A."/>
            <person name="Schmidt C.P."/>
            <person name="Ernst U."/>
            <person name="Wellenreuther R."/>
            <person name="Mehrle A."/>
            <person name="Schuster C."/>
            <person name="Bahr A."/>
            <person name="Bloecker H."/>
            <person name="Heubner D."/>
            <person name="Hoerlein A."/>
            <person name="Michel G."/>
            <person name="Wedler H."/>
            <person name="Koehrer K."/>
            <person name="Ottenwaelder B."/>
            <person name="Poustka A."/>
            <person name="Wiemann S."/>
            <person name="Schupp I."/>
        </authorList>
    </citation>
    <scope>NUCLEOTIDE SEQUENCE [LARGE SCALE MRNA] (ISOFORM 4)</scope>
    <source>
        <tissue>Retina</tissue>
    </source>
</reference>
<reference key="5">
    <citation type="journal article" date="2004" name="Nat. Genet.">
        <title>Complete sequencing and characterization of 21,243 full-length human cDNAs.</title>
        <authorList>
            <person name="Ota T."/>
            <person name="Suzuki Y."/>
            <person name="Nishikawa T."/>
            <person name="Otsuki T."/>
            <person name="Sugiyama T."/>
            <person name="Irie R."/>
            <person name="Wakamatsu A."/>
            <person name="Hayashi K."/>
            <person name="Sato H."/>
            <person name="Nagai K."/>
            <person name="Kimura K."/>
            <person name="Makita H."/>
            <person name="Sekine M."/>
            <person name="Obayashi M."/>
            <person name="Nishi T."/>
            <person name="Shibahara T."/>
            <person name="Tanaka T."/>
            <person name="Ishii S."/>
            <person name="Yamamoto J."/>
            <person name="Saito K."/>
            <person name="Kawai Y."/>
            <person name="Isono Y."/>
            <person name="Nakamura Y."/>
            <person name="Nagahari K."/>
            <person name="Murakami K."/>
            <person name="Yasuda T."/>
            <person name="Iwayanagi T."/>
            <person name="Wagatsuma M."/>
            <person name="Shiratori A."/>
            <person name="Sudo H."/>
            <person name="Hosoiri T."/>
            <person name="Kaku Y."/>
            <person name="Kodaira H."/>
            <person name="Kondo H."/>
            <person name="Sugawara M."/>
            <person name="Takahashi M."/>
            <person name="Kanda K."/>
            <person name="Yokoi T."/>
            <person name="Furuya T."/>
            <person name="Kikkawa E."/>
            <person name="Omura Y."/>
            <person name="Abe K."/>
            <person name="Kamihara K."/>
            <person name="Katsuta N."/>
            <person name="Sato K."/>
            <person name="Tanikawa M."/>
            <person name="Yamazaki M."/>
            <person name="Ninomiya K."/>
            <person name="Ishibashi T."/>
            <person name="Yamashita H."/>
            <person name="Murakawa K."/>
            <person name="Fujimori K."/>
            <person name="Tanai H."/>
            <person name="Kimata M."/>
            <person name="Watanabe M."/>
            <person name="Hiraoka S."/>
            <person name="Chiba Y."/>
            <person name="Ishida S."/>
            <person name="Ono Y."/>
            <person name="Takiguchi S."/>
            <person name="Watanabe S."/>
            <person name="Yosida M."/>
            <person name="Hotuta T."/>
            <person name="Kusano J."/>
            <person name="Kanehori K."/>
            <person name="Takahashi-Fujii A."/>
            <person name="Hara H."/>
            <person name="Tanase T.-O."/>
            <person name="Nomura Y."/>
            <person name="Togiya S."/>
            <person name="Komai F."/>
            <person name="Hara R."/>
            <person name="Takeuchi K."/>
            <person name="Arita M."/>
            <person name="Imose N."/>
            <person name="Musashino K."/>
            <person name="Yuuki H."/>
            <person name="Oshima A."/>
            <person name="Sasaki N."/>
            <person name="Aotsuka S."/>
            <person name="Yoshikawa Y."/>
            <person name="Matsunawa H."/>
            <person name="Ichihara T."/>
            <person name="Shiohata N."/>
            <person name="Sano S."/>
            <person name="Moriya S."/>
            <person name="Momiyama H."/>
            <person name="Satoh N."/>
            <person name="Takami S."/>
            <person name="Terashima Y."/>
            <person name="Suzuki O."/>
            <person name="Nakagawa S."/>
            <person name="Senoh A."/>
            <person name="Mizoguchi H."/>
            <person name="Goto Y."/>
            <person name="Shimizu F."/>
            <person name="Wakebe H."/>
            <person name="Hishigaki H."/>
            <person name="Watanabe T."/>
            <person name="Sugiyama A."/>
            <person name="Takemoto M."/>
            <person name="Kawakami B."/>
            <person name="Yamazaki M."/>
            <person name="Watanabe K."/>
            <person name="Kumagai A."/>
            <person name="Itakura S."/>
            <person name="Fukuzumi Y."/>
            <person name="Fujimori Y."/>
            <person name="Komiyama M."/>
            <person name="Tashiro H."/>
            <person name="Tanigami A."/>
            <person name="Fujiwara T."/>
            <person name="Ono T."/>
            <person name="Yamada K."/>
            <person name="Fujii Y."/>
            <person name="Ozaki K."/>
            <person name="Hirao M."/>
            <person name="Ohmori Y."/>
            <person name="Kawabata A."/>
            <person name="Hikiji T."/>
            <person name="Kobatake N."/>
            <person name="Inagaki H."/>
            <person name="Ikema Y."/>
            <person name="Okamoto S."/>
            <person name="Okitani R."/>
            <person name="Kawakami T."/>
            <person name="Noguchi S."/>
            <person name="Itoh T."/>
            <person name="Shigeta K."/>
            <person name="Senba T."/>
            <person name="Matsumura K."/>
            <person name="Nakajima Y."/>
            <person name="Mizuno T."/>
            <person name="Morinaga M."/>
            <person name="Sasaki M."/>
            <person name="Togashi T."/>
            <person name="Oyama M."/>
            <person name="Hata H."/>
            <person name="Watanabe M."/>
            <person name="Komatsu T."/>
            <person name="Mizushima-Sugano J."/>
            <person name="Satoh T."/>
            <person name="Shirai Y."/>
            <person name="Takahashi Y."/>
            <person name="Nakagawa K."/>
            <person name="Okumura K."/>
            <person name="Nagase T."/>
            <person name="Nomura N."/>
            <person name="Kikuchi H."/>
            <person name="Masuho Y."/>
            <person name="Yamashita R."/>
            <person name="Nakai K."/>
            <person name="Yada T."/>
            <person name="Nakamura Y."/>
            <person name="Ohara O."/>
            <person name="Isogai T."/>
            <person name="Sugano S."/>
        </authorList>
    </citation>
    <scope>NUCLEOTIDE SEQUENCE [LARGE SCALE MRNA] (ISOFORM 5)</scope>
</reference>
<reference key="6">
    <citation type="journal article" date="2006" name="Nature">
        <title>The DNA sequence and biological annotation of human chromosome 1.</title>
        <authorList>
            <person name="Gregory S.G."/>
            <person name="Barlow K.F."/>
            <person name="McLay K.E."/>
            <person name="Kaul R."/>
            <person name="Swarbreck D."/>
            <person name="Dunham A."/>
            <person name="Scott C.E."/>
            <person name="Howe K.L."/>
            <person name="Woodfine K."/>
            <person name="Spencer C.C.A."/>
            <person name="Jones M.C."/>
            <person name="Gillson C."/>
            <person name="Searle S."/>
            <person name="Zhou Y."/>
            <person name="Kokocinski F."/>
            <person name="McDonald L."/>
            <person name="Evans R."/>
            <person name="Phillips K."/>
            <person name="Atkinson A."/>
            <person name="Cooper R."/>
            <person name="Jones C."/>
            <person name="Hall R.E."/>
            <person name="Andrews T.D."/>
            <person name="Lloyd C."/>
            <person name="Ainscough R."/>
            <person name="Almeida J.P."/>
            <person name="Ambrose K.D."/>
            <person name="Anderson F."/>
            <person name="Andrew R.W."/>
            <person name="Ashwell R.I.S."/>
            <person name="Aubin K."/>
            <person name="Babbage A.K."/>
            <person name="Bagguley C.L."/>
            <person name="Bailey J."/>
            <person name="Beasley H."/>
            <person name="Bethel G."/>
            <person name="Bird C.P."/>
            <person name="Bray-Allen S."/>
            <person name="Brown J.Y."/>
            <person name="Brown A.J."/>
            <person name="Buckley D."/>
            <person name="Burton J."/>
            <person name="Bye J."/>
            <person name="Carder C."/>
            <person name="Chapman J.C."/>
            <person name="Clark S.Y."/>
            <person name="Clarke G."/>
            <person name="Clee C."/>
            <person name="Cobley V."/>
            <person name="Collier R.E."/>
            <person name="Corby N."/>
            <person name="Coville G.J."/>
            <person name="Davies J."/>
            <person name="Deadman R."/>
            <person name="Dunn M."/>
            <person name="Earthrowl M."/>
            <person name="Ellington A.G."/>
            <person name="Errington H."/>
            <person name="Frankish A."/>
            <person name="Frankland J."/>
            <person name="French L."/>
            <person name="Garner P."/>
            <person name="Garnett J."/>
            <person name="Gay L."/>
            <person name="Ghori M.R.J."/>
            <person name="Gibson R."/>
            <person name="Gilby L.M."/>
            <person name="Gillett W."/>
            <person name="Glithero R.J."/>
            <person name="Grafham D.V."/>
            <person name="Griffiths C."/>
            <person name="Griffiths-Jones S."/>
            <person name="Grocock R."/>
            <person name="Hammond S."/>
            <person name="Harrison E.S.I."/>
            <person name="Hart E."/>
            <person name="Haugen E."/>
            <person name="Heath P.D."/>
            <person name="Holmes S."/>
            <person name="Holt K."/>
            <person name="Howden P.J."/>
            <person name="Hunt A.R."/>
            <person name="Hunt S.E."/>
            <person name="Hunter G."/>
            <person name="Isherwood J."/>
            <person name="James R."/>
            <person name="Johnson C."/>
            <person name="Johnson D."/>
            <person name="Joy A."/>
            <person name="Kay M."/>
            <person name="Kershaw J.K."/>
            <person name="Kibukawa M."/>
            <person name="Kimberley A.M."/>
            <person name="King A."/>
            <person name="Knights A.J."/>
            <person name="Lad H."/>
            <person name="Laird G."/>
            <person name="Lawlor S."/>
            <person name="Leongamornlert D.A."/>
            <person name="Lloyd D.M."/>
            <person name="Loveland J."/>
            <person name="Lovell J."/>
            <person name="Lush M.J."/>
            <person name="Lyne R."/>
            <person name="Martin S."/>
            <person name="Mashreghi-Mohammadi M."/>
            <person name="Matthews L."/>
            <person name="Matthews N.S.W."/>
            <person name="McLaren S."/>
            <person name="Milne S."/>
            <person name="Mistry S."/>
            <person name="Moore M.J.F."/>
            <person name="Nickerson T."/>
            <person name="O'Dell C.N."/>
            <person name="Oliver K."/>
            <person name="Palmeiri A."/>
            <person name="Palmer S.A."/>
            <person name="Parker A."/>
            <person name="Patel D."/>
            <person name="Pearce A.V."/>
            <person name="Peck A.I."/>
            <person name="Pelan S."/>
            <person name="Phelps K."/>
            <person name="Phillimore B.J."/>
            <person name="Plumb R."/>
            <person name="Rajan J."/>
            <person name="Raymond C."/>
            <person name="Rouse G."/>
            <person name="Saenphimmachak C."/>
            <person name="Sehra H.K."/>
            <person name="Sheridan E."/>
            <person name="Shownkeen R."/>
            <person name="Sims S."/>
            <person name="Skuce C.D."/>
            <person name="Smith M."/>
            <person name="Steward C."/>
            <person name="Subramanian S."/>
            <person name="Sycamore N."/>
            <person name="Tracey A."/>
            <person name="Tromans A."/>
            <person name="Van Helmond Z."/>
            <person name="Wall M."/>
            <person name="Wallis J.M."/>
            <person name="White S."/>
            <person name="Whitehead S.L."/>
            <person name="Wilkinson J.E."/>
            <person name="Willey D.L."/>
            <person name="Williams H."/>
            <person name="Wilming L."/>
            <person name="Wray P.W."/>
            <person name="Wu Z."/>
            <person name="Coulson A."/>
            <person name="Vaudin M."/>
            <person name="Sulston J.E."/>
            <person name="Durbin R.M."/>
            <person name="Hubbard T."/>
            <person name="Wooster R."/>
            <person name="Dunham I."/>
            <person name="Carter N.P."/>
            <person name="McVean G."/>
            <person name="Ross M.T."/>
            <person name="Harrow J."/>
            <person name="Olson M.V."/>
            <person name="Beck S."/>
            <person name="Rogers J."/>
            <person name="Bentley D.R."/>
        </authorList>
    </citation>
    <scope>NUCLEOTIDE SEQUENCE [LARGE SCALE GENOMIC DNA]</scope>
</reference>
<reference key="7">
    <citation type="submission" date="2005-07" db="EMBL/GenBank/DDBJ databases">
        <authorList>
            <person name="Mural R.J."/>
            <person name="Istrail S."/>
            <person name="Sutton G.G."/>
            <person name="Florea L."/>
            <person name="Halpern A.L."/>
            <person name="Mobarry C.M."/>
            <person name="Lippert R."/>
            <person name="Walenz B."/>
            <person name="Shatkay H."/>
            <person name="Dew I."/>
            <person name="Miller J.R."/>
            <person name="Flanigan M.J."/>
            <person name="Edwards N.J."/>
            <person name="Bolanos R."/>
            <person name="Fasulo D."/>
            <person name="Halldorsson B.V."/>
            <person name="Hannenhalli S."/>
            <person name="Turner R."/>
            <person name="Yooseph S."/>
            <person name="Lu F."/>
            <person name="Nusskern D.R."/>
            <person name="Shue B.C."/>
            <person name="Zheng X.H."/>
            <person name="Zhong F."/>
            <person name="Delcher A.L."/>
            <person name="Huson D.H."/>
            <person name="Kravitz S.A."/>
            <person name="Mouchard L."/>
            <person name="Reinert K."/>
            <person name="Remington K.A."/>
            <person name="Clark A.G."/>
            <person name="Waterman M.S."/>
            <person name="Eichler E.E."/>
            <person name="Adams M.D."/>
            <person name="Hunkapiller M.W."/>
            <person name="Myers E.W."/>
            <person name="Venter J.C."/>
        </authorList>
    </citation>
    <scope>NUCLEOTIDE SEQUENCE [LARGE SCALE GENOMIC DNA]</scope>
</reference>
<reference key="8">
    <citation type="journal article" date="2004" name="Genome Res.">
        <title>The status, quality, and expansion of the NIH full-length cDNA project: the Mammalian Gene Collection (MGC).</title>
        <authorList>
            <consortium name="The MGC Project Team"/>
        </authorList>
    </citation>
    <scope>NUCLEOTIDE SEQUENCE [LARGE SCALE MRNA] (ISOFORM 1)</scope>
    <source>
        <tissue>Cerebellum</tissue>
    </source>
</reference>
<reference key="9">
    <citation type="journal article" date="2002" name="Ophthalmic Genet.">
        <title>A novel mutation disrupting the cytoplasmic domain of CRB1 in a large consanguineous family of Palestinian origin affected with Leber congenital amaurosis.</title>
        <authorList>
            <person name="Gerber S."/>
            <person name="Perrault I."/>
            <person name="Hanein S."/>
            <person name="Shalev S."/>
            <person name="Zlotogora J."/>
            <person name="Barbet F."/>
            <person name="Ducroq D."/>
            <person name="Dufier J.-L."/>
            <person name="Munnich A."/>
            <person name="Rozet J."/>
            <person name="Kaplan J."/>
        </authorList>
    </citation>
    <scope>INVOLVEMENT IN LCA8</scope>
</reference>
<reference key="10">
    <citation type="journal article" date="2007" name="Exp. Cell Res.">
        <title>FERM protein EPB41L5 is a novel member of the mammalian CRB-MPP5 polarity complex.</title>
        <authorList>
            <person name="Gosens I."/>
            <person name="Sessa A."/>
            <person name="den Hollander A.I."/>
            <person name="Letteboer S.J.F."/>
            <person name="Belloni V."/>
            <person name="Arends M.L."/>
            <person name="Le Bivic A."/>
            <person name="Cremers F.P.M."/>
            <person name="Broccoli V."/>
            <person name="Roepman R."/>
        </authorList>
    </citation>
    <scope>IDENTIFICATION IN COMPLEX WITH PALS1 AND EPB41L5</scope>
    <scope>INTERACTION WITH PALS1 AND EPB41L5</scope>
    <scope>DEVELOPMENTAL STAGE</scope>
    <scope>MUTAGENESIS OF 1377-GLY--TYR-1379 AND 1403-GLU--ILE-1406</scope>
</reference>
<reference key="11">
    <citation type="journal article" date="2001" name="Am. J. Hum. Genet.">
        <title>Leber congenital amaurosis and retinitis pigmentosa with Coats-like exudative vasculopathy are associated with mutations in the crumbs homologue 1 (CRB1) gene.</title>
        <authorList>
            <person name="den Hollander A.I."/>
            <person name="Heckenlively J.R."/>
            <person name="van den Born L.I."/>
            <person name="de Kok Y.J.M."/>
            <person name="van der Velde-Visser S.D."/>
            <person name="Kellner U."/>
            <person name="Jurklies B."/>
            <person name="van Schooneveld M.J."/>
            <person name="Blankenagel A."/>
            <person name="Rohrschneider K."/>
            <person name="Wissinger B."/>
            <person name="Cruysberg J.R.M."/>
            <person name="Deutman A.F."/>
            <person name="Brunner H.G."/>
            <person name="Apfelstedt-Sylla E."/>
            <person name="Hoyng C.B."/>
            <person name="Cremers F.P.M."/>
        </authorList>
    </citation>
    <scope>VARIANTS LCA8 TYR-948 AND ARG-1100</scope>
    <scope>VARIANTS RP12 CYS-433; CYS-764; HIS-837; TYR-948; ARG-1181 AND THR-1354</scope>
    <scope>VARIANTS MET-289; MET-821; SER-894 AND HIS-1331</scope>
</reference>
<reference key="12">
    <citation type="journal article" date="2001" name="Am. J. Hum. Genet.">
        <authorList>
            <person name="den Hollander A.I."/>
            <person name="Heckenlively J.R."/>
            <person name="van den Born L.I."/>
            <person name="de Kok Y.J.M."/>
            <person name="van der Velde-Visser S.D."/>
            <person name="Kellner U."/>
            <person name="Jurklies B."/>
            <person name="van Schooneveld M.J."/>
            <person name="Blankenagel A."/>
            <person name="Rohrschneider K."/>
            <person name="Wissinger B."/>
            <person name="Cruysberg J.R.M."/>
            <person name="Deutman A.F."/>
            <person name="Brunner H.G."/>
            <person name="Apfelstedt-Sylla E."/>
            <person name="Hoyng C.B."/>
            <person name="Cremers F.P.M."/>
        </authorList>
    </citation>
    <scope>ERRATUM OF PUBMED:11389483</scope>
</reference>
<reference key="13">
    <citation type="journal article" date="2001" name="Arch. Ophthalmol.">
        <title>Mutations in the CRB1 gene cause Leber congenital amaurosis.</title>
        <authorList>
            <person name="Lotery A.J."/>
            <person name="Jacobson S.G."/>
            <person name="Fishman G.A."/>
            <person name="Weleber R.G."/>
            <person name="Fulton A.B."/>
            <person name="Namperumalsamy P."/>
            <person name="Heon E."/>
            <person name="Levin A.V."/>
            <person name="Grover S."/>
            <person name="Rosenow J.R."/>
            <person name="Kopp K.K."/>
            <person name="Sheffield V.C."/>
            <person name="Stone E.M."/>
        </authorList>
    </citation>
    <scope>VARIANTS LCA8 VAL-144; TYR-383; GLY-480; ARG-480; TYR-681; CYS-764; TYR-948; ARG-1205 AND HIS-1317</scope>
    <scope>VARIANTS MET-289; GLN-769 AND HIS-1331</scope>
</reference>
<reference key="14">
    <citation type="journal article" date="2001" name="Ophthalmic Genet.">
        <title>CRB1 mutations may result in retinitis pigmentosa without para-arteriolar RPE preservation.</title>
        <authorList>
            <person name="Lotery A.J."/>
            <person name="Malik A."/>
            <person name="Shami S.A."/>
            <person name="Sindhi M."/>
            <person name="Chohan B."/>
            <person name="Maqbool C."/>
            <person name="Moore P.A."/>
            <person name="Denton M.J."/>
            <person name="Stone E.M."/>
        </authorList>
    </citation>
    <scope>VARIANT RP12 SER-1321</scope>
</reference>
<reference key="15">
    <citation type="journal article" date="2003" name="Exp. Eye Res.">
        <title>Mutation screening of Pakistani families with congenital eye disorders.</title>
        <authorList>
            <person name="Khaliq S."/>
            <person name="Abid A."/>
            <person name="Hameed A."/>
            <person name="Anwar K."/>
            <person name="Mohyuddin A."/>
            <person name="Azmat Z."/>
            <person name="Shami S.A."/>
            <person name="Ismail M."/>
            <person name="Mehdi S.Q."/>
        </authorList>
    </citation>
    <scope>VARIANTS RP12 ARG-846 AND PRO-1071</scope>
    <scope>VARIANT LCA8 THR-989</scope>
</reference>
<reference key="16">
    <citation type="journal article" date="2003" name="Hum. Mol. Genet.">
        <title>Crumbs homolog 1 (CRB1) mutations result in a thick human retina with abnormal lamination.</title>
        <authorList>
            <person name="Jacobson S.G."/>
            <person name="Cideciyan A.V."/>
            <person name="Aleman T.S."/>
            <person name="Pianta M.J."/>
            <person name="Sumaroka A."/>
            <person name="Schwartz S.B."/>
            <person name="Smilko E.E."/>
            <person name="Milam A.H."/>
            <person name="Sheffield V.C."/>
            <person name="Stone E.M."/>
        </authorList>
    </citation>
    <scope>VARIANTS LCA8 SER-749 DEL; CYS-764; TYR-948 AND PHE-1218</scope>
</reference>
<reference key="17">
    <citation type="journal article" date="2003" name="J. Med. Genet.">
        <title>Study of the involvement of the RGR, CRPB1, and CRB1 genes in the pathogenesis of autosomal recessive retinitis pigmentosa.</title>
        <authorList>
            <person name="Bernal S."/>
            <person name="Calaf M."/>
            <person name="Garcia-Hoyos M."/>
            <person name="Garcia-Sandoval B."/>
            <person name="Rosell J."/>
            <person name="Adan A."/>
            <person name="Ayuso C."/>
            <person name="Baiget M."/>
        </authorList>
    </citation>
    <scope>VARIANTS RP12 SER-749 DEL; GLY-891; TYR-948; LEU-962 DEL AND THR-1100</scope>
    <scope>VARIANT LCA8 THR-205</scope>
    <scope>VARIANTS MET-289; GLU-679; HIS-769 AND HIS-1331</scope>
</reference>
<reference key="18">
    <citation type="journal article" date="2004" name="Hum. Mutat.">
        <title>Leber congenital amaurosis: comprehensive survey of the genetic heterogeneity, refinement of the clinical definition, and genotype-phenotype correlations as a strategy for molecular diagnosis.</title>
        <authorList>
            <person name="Hanein S."/>
            <person name="Perrault I."/>
            <person name="Gerber S."/>
            <person name="Tanguy G."/>
            <person name="Barbet F."/>
            <person name="Ducroq D."/>
            <person name="Calvas P."/>
            <person name="Dollfus H."/>
            <person name="Hamel C."/>
            <person name="Lopponen T."/>
            <person name="Munier F."/>
            <person name="Santos L."/>
            <person name="Shalev S."/>
            <person name="Zafeiriou D."/>
            <person name="Dufier J.-L."/>
            <person name="Munnich A."/>
            <person name="Rozet J.-M."/>
            <person name="Kaplan J."/>
        </authorList>
    </citation>
    <scope>VARIANTS LCA8 TYR-584; GLN-710; THR-741; MET-745; CYS-764; THR-852; TYR-948; ILE-1025; ARG-1103; ARG-1107; PRO-1107 AND SER-1321</scope>
</reference>
<reference key="19">
    <citation type="journal article" date="2004" name="Hum. Mutat.">
        <title>CRB1 mutation spectrum in inherited retinal dystrophies.</title>
        <authorList>
            <person name="den Hollander A.I."/>
            <person name="Davis J."/>
            <person name="van der Velde-Visser S.D."/>
            <person name="Zonneveld M.N."/>
            <person name="Pierrottet C.O."/>
            <person name="Koenekoop R.K."/>
            <person name="Kellner U."/>
            <person name="van den Born L.I."/>
            <person name="Heckenlively J.R."/>
            <person name="Hoyng C.B."/>
            <person name="Handford P.A."/>
            <person name="Roepman R."/>
            <person name="Cremers F.P.M."/>
        </authorList>
    </citation>
    <scope>VARIANTS RP12 PHE-195; GLU-578; TYR-587; MET-745; CYS-764; THR-836; SER-850; TYR-948; SER-959; ILE-986; THR-1100 AND HIS-1383</scope>
    <scope>VARIANT LCA8 THR-205</scope>
    <scope>VARIANT GLN-905</scope>
</reference>
<reference key="20">
    <citation type="journal article" date="2005" name="Invest. Ophthalmol. Vis. Sci.">
        <title>Pigmented paravenous chorioretinal atrophy is associated with a mutation within the crumbs homolog 1 (CRB1) gene.</title>
        <authorList>
            <person name="McKay G.J."/>
            <person name="Clarke S."/>
            <person name="Davis J.A."/>
            <person name="Simpson D.A."/>
            <person name="Silvestri G."/>
        </authorList>
    </citation>
    <scope>VARIANT PPCRA MET-162</scope>
</reference>
<reference key="21">
    <citation type="journal article" date="2005" name="Ophthalmology">
        <title>Clinical phenotypes in carriers of Leber congenital amaurosis mutations.</title>
        <authorList>
            <person name="Galvin J.A."/>
            <person name="Fishman G.A."/>
            <person name="Stone E.M."/>
            <person name="Koenekoop R.K."/>
        </authorList>
    </citation>
    <scope>VARIANTS LCA8 PRO-753; CYS-764 AND TYR-948</scope>
</reference>
<reference key="22">
    <citation type="journal article" date="2005" name="Retina">
        <title>Evaluation of genotype-phenotype associations in Leber congenital amaurosis.</title>
        <authorList>
            <person name="Galvin J.A."/>
            <person name="Fishman G.A."/>
            <person name="Stone E.M."/>
            <person name="Koenekoop R.K."/>
        </authorList>
    </citation>
    <scope>VARIANTS LCA8 ARG-480; TYR-681; PRO-753; CYS-764 AND TYR-948</scope>
    <scope>VARIANT SER-488</scope>
</reference>
<reference key="23">
    <citation type="journal article" date="2006" name="Hum. Genet.">
        <title>Gene symbol: CRB1. Disease: early onset retinitis pigmentosa.</title>
        <authorList>
            <person name="Vallespin E."/>
            <person name="Riveiro-Alvarez R."/>
            <person name="Aguirre-Lamban J."/>
            <person name="Cantalapiedra D."/>
            <person name="Tapias I."/>
            <person name="Garcia-Sandoval B."/>
            <person name="Trujillo-Tiebas M.J."/>
            <person name="Ayuso C."/>
        </authorList>
    </citation>
    <scope>VARIANT LCA8 TYR-564</scope>
</reference>
<reference key="24">
    <citation type="journal article" date="2006" name="Invest. Ophthalmol. Vis. Sci.">
        <title>CRB1 heterozygotes with regional retinal dysfunction: implications for genetic testing of Leber congenital amaurosis.</title>
        <authorList>
            <person name="Yzer S."/>
            <person name="Fishman G.A."/>
            <person name="Racine J."/>
            <person name="Al-Zuhaibi S."/>
            <person name="Chakor H."/>
            <person name="Dorfman A."/>
            <person name="Szlyk J."/>
            <person name="Lachapelle P."/>
            <person name="van den Born L.I."/>
            <person name="Allikmets R."/>
            <person name="Lopez I."/>
            <person name="Cremers F.P."/>
            <person name="Koenekoop R.K."/>
        </authorList>
    </citation>
    <scope>VARIANT LCA8 ARG-454</scope>
</reference>
<reference key="25">
    <citation type="journal article" date="2006" name="Science">
        <title>The consensus coding sequences of human breast and colorectal cancers.</title>
        <authorList>
            <person name="Sjoeblom T."/>
            <person name="Jones S."/>
            <person name="Wood L.D."/>
            <person name="Parsons D.W."/>
            <person name="Lin J."/>
            <person name="Barber T.D."/>
            <person name="Mandelker D."/>
            <person name="Leary R.J."/>
            <person name="Ptak J."/>
            <person name="Silliman N."/>
            <person name="Szabo S."/>
            <person name="Buckhaults P."/>
            <person name="Farrell C."/>
            <person name="Meeh P."/>
            <person name="Markowitz S.D."/>
            <person name="Willis J."/>
            <person name="Dawson D."/>
            <person name="Willson J.K.V."/>
            <person name="Gazdar A.F."/>
            <person name="Hartigan J."/>
            <person name="Wu L."/>
            <person name="Liu C."/>
            <person name="Parmigiani G."/>
            <person name="Park B.H."/>
            <person name="Bachman K.E."/>
            <person name="Papadopoulos N."/>
            <person name="Vogelstein B."/>
            <person name="Kinzler K.W."/>
            <person name="Velculescu V.E."/>
        </authorList>
    </citation>
    <scope>VARIANT [LARGE SCALE ANALYSIS] MET-745</scope>
</reference>
<reference key="26">
    <citation type="journal article" date="2007" name="Hum. Genet.">
        <title>Gene symbol: CRB1.</title>
        <authorList>
            <person name="Vallespin E."/>
            <person name="Millan J.M."/>
            <person name="Riveiro-Alvarez R."/>
            <person name="Aguirre-Lamban J."/>
            <person name="Cantalapiedra D."/>
            <person name="Gallego J."/>
            <person name="Trujillo-Tiebas M.J."/>
            <person name="Ayuso C."/>
        </authorList>
    </citation>
    <scope>VARIANT LCA8 PRO-535</scope>
</reference>
<reference key="27">
    <citation type="journal article" date="2007" name="Invest. Ophthalmol. Vis. Sci.">
        <title>Clinical and molecular genetics of Leber's congenital amaurosis: a multicenter study of Italian patients.</title>
        <authorList>
            <person name="Simonelli F."/>
            <person name="Ziviello C."/>
            <person name="Testa F."/>
            <person name="Rossi S."/>
            <person name="Fazzi E."/>
            <person name="Bianchi P.E."/>
            <person name="Fossarello M."/>
            <person name="Signorini S."/>
            <person name="Bertone C."/>
            <person name="Galantuomo S."/>
            <person name="Brancati F."/>
            <person name="Valente E.M."/>
            <person name="Ciccodicola A."/>
            <person name="Rinaldi E."/>
            <person name="Auricchio A."/>
            <person name="Banfi S."/>
        </authorList>
    </citation>
    <scope>VARIANTS LCA8 TYR-438; MET-745; THR-852 AND ARG-1103</scope>
    <scope>VARIANT MET-289</scope>
</reference>
<reference key="28">
    <citation type="journal article" date="2007" name="Invest. Ophthalmol. Vis. Sci.">
        <title>Identification of novel mutations in patients with Leber congenital amaurosis and juvenile RP by genome-wide homozygosity mapping with SNP microarrays.</title>
        <authorList>
            <person name="den Hollander A.I."/>
            <person name="Lopez I."/>
            <person name="Yzer S."/>
            <person name="Zonneveld M.N."/>
            <person name="Janssen I.M."/>
            <person name="Strom T.M."/>
            <person name="Hehir-Kwa J.Y."/>
            <person name="Veltman J.A."/>
            <person name="Arends M.L."/>
            <person name="Meitinger T."/>
            <person name="Musarella M.A."/>
            <person name="van den Born L.I."/>
            <person name="Fishman G.A."/>
            <person name="Maumenee I.H."/>
            <person name="Rohrschneider K."/>
            <person name="Cremers F.P."/>
            <person name="Koenekoop R.K."/>
        </authorList>
    </citation>
    <scope>VARIANTS LCA8 TYR-939; TYR-948 AND PHE-1332</scope>
</reference>
<reference key="29">
    <citation type="journal article" date="2008" name="Mol. Vis.">
        <title>Molecular characterization of Leber congenital amaurosis in Koreans.</title>
        <authorList>
            <person name="Seong M.W."/>
            <person name="Kim S.Y."/>
            <person name="Yu Y.S."/>
            <person name="Hwang J.M."/>
            <person name="Kim J.Y."/>
            <person name="Park S.S."/>
        </authorList>
    </citation>
    <scope>VARIANTS LCA8 ASP-333 AND THR-937</scope>
    <scope>VARIANT HIS-769</scope>
</reference>
<reference key="30">
    <citation type="journal article" date="2009" name="Am. J. Med. Genet. A">
        <title>Genetic heterogeneity in two consanguineous families segregating early onset retinal degeneration: the pitfalls of homozygosity mapping.</title>
        <authorList>
            <person name="Benayoun L."/>
            <person name="Spiegel R."/>
            <person name="Auslender N."/>
            <person name="Abbasi A.H."/>
            <person name="Rizel L."/>
            <person name="Hujeirat Y."/>
            <person name="Salama I."/>
            <person name="Garzozi H.J."/>
            <person name="Allon-Shalev S."/>
            <person name="Ben-Yosef T."/>
        </authorList>
    </citation>
    <scope>VARIANT RP12 ARG-1103</scope>
</reference>
<reference key="31">
    <citation type="journal article" date="2009" name="Mol. Vis.">
        <title>Molecular characterization of retinitis pigmentosa in Saudi Arabia.</title>
        <authorList>
            <person name="Aldahmesh M.A."/>
            <person name="Safieh L.A."/>
            <person name="Alkuraya H."/>
            <person name="Al-Rajhi A."/>
            <person name="Shamseldin H."/>
            <person name="Hashem M."/>
            <person name="Alzahrani F."/>
            <person name="Khan A.O."/>
            <person name="Alqahtani F."/>
            <person name="Rahbeeni Z."/>
            <person name="Alowain M."/>
            <person name="Khalak H."/>
            <person name="Al-Hazzaa S."/>
            <person name="Meyer B.F."/>
            <person name="Alkuraya F.S."/>
        </authorList>
    </citation>
    <scope>VARIANTS RP12 PHE-27 AND TRP-1165</scope>
</reference>
<reference key="32">
    <citation type="journal article" date="2010" name="Hum. Genet.">
        <title>Novel human pathological mutations. Gene symbol: CRB1. Disease: Leber congenital amaurosis.</title>
        <authorList>
            <person name="Vallespin E."/>
            <person name="Avila-Fernandez A."/>
            <person name="Velez-Monsalve C."/>
            <person name="Almoguera B."/>
            <person name="Martinez-Garcia M."/>
            <person name="Gomez-Dominguez B."/>
            <person name="Gonzalez-Roubaud C."/>
            <person name="Cantalapiedra D."/>
            <person name="Trujillo-Tiebas M.J."/>
            <person name="Ayuso C."/>
        </authorList>
    </citation>
    <scope>VARIANT LCA8 CYS-1161</scope>
</reference>
<reference key="33">
    <citation type="journal article" date="2010" name="Hum. Mutat.">
        <title>Genetic screening of LCA in Belgium: predominance of CEP290 and identification of potential modifier alleles in AHI1 of CEP290-related phenotypes.</title>
        <authorList>
            <person name="Coppieters F."/>
            <person name="Casteels I."/>
            <person name="Meire F."/>
            <person name="De Jaegere S."/>
            <person name="Hooghe S."/>
            <person name="van Regemorter N."/>
            <person name="Van Esch H."/>
            <person name="Matuleviciene A."/>
            <person name="Nunes L."/>
            <person name="Meersschaut V."/>
            <person name="Walraedt S."/>
            <person name="Standaert L."/>
            <person name="Coucke P."/>
            <person name="Hoeben H."/>
            <person name="Kroes H.Y."/>
            <person name="Vande Walle J."/>
            <person name="de Ravel T."/>
            <person name="Leroy B.P."/>
            <person name="De Baere E."/>
        </authorList>
    </citation>
    <scope>INVOLVEMENT IN RETINAL DYSTROPHIES</scope>
    <scope>VARIANTS EARLY-ONSET RETINAL DYSTROPHY TYR-310; CYS-764 AND TYR-948</scope>
    <scope>VARIANT VAL-491</scope>
</reference>
<reference key="34">
    <citation type="journal article" date="2010" name="Ophthalmology">
        <title>Development of a diagnostic genetic test for simplex and autosomal recessive retinitis pigmentosa.</title>
        <authorList>
            <person name="Clark G.R."/>
            <person name="Crowe P."/>
            <person name="Muszynska D."/>
            <person name="O'Prey D."/>
            <person name="O'Neill J."/>
            <person name="Alexander S."/>
            <person name="Willoughby C.E."/>
            <person name="McKay G.J."/>
            <person name="Silvestri G."/>
            <person name="Simpson D.A."/>
        </authorList>
    </citation>
    <scope>VARIANTS RP12 TRP-45; VAL-710; MET-745; SER-850; ILE-901; TYR-948 AND HIS-1383</scope>
    <scope>VARIANT HIS-769</scope>
</reference>
<reference key="35">
    <citation type="journal article" date="2011" name="Arch. Ophthalmol.">
        <title>Identification of novel mutations in Pakistani families with autosomal recessive retinitis pigmentosa.</title>
        <authorList>
            <person name="Azam M."/>
            <person name="Collin R.W."/>
            <person name="Malik A."/>
            <person name="Khan M.I."/>
            <person name="Shah S.T."/>
            <person name="Shah A.A."/>
            <person name="Hussain A."/>
            <person name="Sadeque A."/>
            <person name="Arimadyo K."/>
            <person name="Ajmal M."/>
            <person name="Azam A."/>
            <person name="Qureshi N."/>
            <person name="Bokhari H."/>
            <person name="Strom T.M."/>
            <person name="Cremers F.P."/>
            <person name="Qamar R."/>
            <person name="den Hollander A.I."/>
        </authorList>
    </citation>
    <scope>VARIANT RP12 LYS-1099</scope>
</reference>
<reference key="36">
    <citation type="journal article" date="2011" name="Br. J. Ophthalmol.">
        <title>Phenotypic variability in patients with retinal dystrophies due to mutations in CRB1.</title>
        <authorList>
            <person name="Henderson R.H."/>
            <person name="Mackay D.S."/>
            <person name="Li Z."/>
            <person name="Moradi P."/>
            <person name="Sergouniotis P."/>
            <person name="Russell-Eggitt I."/>
            <person name="Thompson D.A."/>
            <person name="Robson A.G."/>
            <person name="Holder G.E."/>
            <person name="Webster A.R."/>
            <person name="Moore A.T."/>
        </authorList>
    </citation>
    <scope>VARIANTS RP12 SER-157; TRP-250; LYS-312; CYS-675; VAL-710; MET-745; CYS-764; THR-836; ARG-846; TYR-948; SER-1012; ASN-1025 AND GLY-1174</scope>
    <scope>VARIANTS LCA8 THR-205; SER-850; THR-1003; ARG-1103; PRO-1107; GLY-1174 AND LEU-1381</scope>
    <scope>VARIANTS EARLY-ONSET RETINAL DYSTROPHY THR-741 AND ASP-1365</scope>
</reference>
<reference key="37">
    <citation type="journal article" date="2011" name="Mol. Vis.">
        <title>Molecular genetic analysis of retinitis pigmentosa in Indonesia using genome-wide homozygosity mapping.</title>
        <authorList>
            <person name="Siemiatkowska A.M."/>
            <person name="Arimadyo K."/>
            <person name="Moruz L.M."/>
            <person name="Astuti G.D."/>
            <person name="de Castro-Miro M."/>
            <person name="Zonneveld M.N."/>
            <person name="Strom T.M."/>
            <person name="de Wijs I.J."/>
            <person name="Hoefsloot L.H."/>
            <person name="Faradz S.M."/>
            <person name="Cremers F.P."/>
            <person name="den Hollander A.I."/>
            <person name="Collin R.W."/>
        </authorList>
    </citation>
    <scope>VARIANT RP12 LEU-1305</scope>
</reference>
<reference key="38">
    <citation type="journal article" date="2011" name="PLoS ONE">
        <title>Detection of variants in 15 genes in 87 unrelated Chinese patients with Leber congenital amaurosis.</title>
        <authorList>
            <person name="Li L."/>
            <person name="Xiao X."/>
            <person name="Li S."/>
            <person name="Jia X."/>
            <person name="Wang P."/>
            <person name="Guo X."/>
            <person name="Jiao X."/>
            <person name="Zhang Q."/>
            <person name="Hejtmancik J.F."/>
        </authorList>
    </citation>
    <scope>VARIANTS LCA8 PRO-635 AND THR-741</scope>
    <scope>VARIANTS LYS-222 AND MET-289</scope>
</reference>
<reference key="39">
    <citation type="journal article" date="2012" name="Hum. Mutat.">
        <title>CRB1 mutations in inherited retinal dystrophies.</title>
        <authorList>
            <person name="Bujakowska K."/>
            <person name="Audo I."/>
            <person name="Mohand-Said S."/>
            <person name="Lancelot M.E."/>
            <person name="Antonio A."/>
            <person name="Germain A."/>
            <person name="Leveillard T."/>
            <person name="Letexier M."/>
            <person name="Saraiva J.P."/>
            <person name="Lonjou C."/>
            <person name="Carpentier W."/>
            <person name="Sahel J.A."/>
            <person name="Bhattacharya S.S."/>
            <person name="Zeitz C."/>
        </authorList>
    </citation>
    <scope>INVOLVEMENT IN RETINAL DYSTROPHIES</scope>
    <scope>VARIANTS RP12 TYR-584; PHE-740; THR-741; THR-836; TYR-948 AND ARG-1103</scope>
    <scope>VARIANTS EARLY-ONSET RETINAL DYSTROPHY ASN-789 DEL; CYS-1198 AND SER-1223</scope>
</reference>
<reference key="40">
    <citation type="journal article" date="2012" name="Hum. Mutat.">
        <title>Next-generation genetic testing for retinitis pigmentosa.</title>
        <authorList>
            <person name="Neveling K."/>
            <person name="Collin R.W."/>
            <person name="Gilissen C."/>
            <person name="van Huet R.A."/>
            <person name="Visser L."/>
            <person name="Kwint M.P."/>
            <person name="Gijsen S.J."/>
            <person name="Zonneveld M.N."/>
            <person name="Wieskamp N."/>
            <person name="de Ligt J."/>
            <person name="Siemiatkowska A.M."/>
            <person name="Hoefsloot L.H."/>
            <person name="Buckley M.F."/>
            <person name="Kellner U."/>
            <person name="Branham K.E."/>
            <person name="den Hollander A.I."/>
            <person name="Hoischen A."/>
            <person name="Hoyng C."/>
            <person name="Klevering B.J."/>
            <person name="van den Born L.I."/>
            <person name="Veltman J.A."/>
            <person name="Cremers F.P."/>
            <person name="Scheffer H."/>
        </authorList>
    </citation>
    <scope>VARIANTS RP12 ASN-534 AND MET-745</scope>
</reference>
<reference key="41">
    <citation type="journal article" date="2017" name="Sci. Rep.">
        <title>The correlation between CRB1 variants and the clinical severity of Brazilian patients with different inherited retinal dystrophy phenotypes.</title>
        <authorList>
            <person name="Motta F.L."/>
            <person name="Salles M.V."/>
            <person name="Costa K.A."/>
            <person name="Filippelli-Silva R."/>
            <person name="Martin R.P."/>
            <person name="Sallum J.M.F."/>
        </authorList>
    </citation>
    <scope>INVOLVEMENT IN RETINAL DYSTROPHIES</scope>
    <scope>VARIANTS LCA8 328-TRP--ILE-1406 DEL; ARG-948; TYR-948 AND 1226-GLY--ILE-1406 DEL</scope>
    <scope>VARIANTS EARLY-ONSET RETINAL DYSTROPHY HIS-764 AND 1390-ARG--ILE-1406 DEL</scope>
    <scope>VARIANTS RP12 THR-836 AND ARG-1107</scope>
    <scope>VARIANTS PRO-479; PRO-921 AND ASN-1031</scope>
</reference>
<reference key="42">
    <citation type="journal article" date="2018" name="J. Med. Genet.">
        <title>Homozygous variants in KIAA1549, encoding a ciliary protein, are associated with autosomal recessive retinitis pigmentosa.</title>
        <authorList>
            <person name="de Bruijn S.E."/>
            <person name="Verbakel S.K."/>
            <person name="de Vrieze E."/>
            <person name="Kremer H."/>
            <person name="Cremers F.P.M."/>
            <person name="Hoyng C.B."/>
            <person name="van den Born L.I."/>
            <person name="Roosing S."/>
        </authorList>
    </citation>
    <scope>VARIANT ASN-894 DEL</scope>
</reference>
<name>CRUM1_HUMAN</name>
<protein>
    <recommendedName>
        <fullName evidence="46">Protein crumbs homolog 1</fullName>
    </recommendedName>
</protein>
<proteinExistence type="evidence at protein level"/>
<sequence>MALKNINYLLIFYLSFSLLIYIKNSFCNKNNTRCLSNSCQNNSTCKDFSKDNDCSCSDTANNLDKDCDNMKDPCFSNPCQGSATCVNTPGERSFLCKCPPGYSGTICETTIGSCGKNSCQHGGICHQDPIYPVCICPAGYAGRFCEIDHDECASSPCQNGAVCQDGIDGYSCFCVPGYQGRHCDLEVDECASDPCKNEATCLNEIGRYTCICPHNYSGVNCELEIDECWSQPCLNGATCQDALGAYFCDCAPGFLGDHCELNTDECASQPCLHGGLCVDGENRYSCNCTGSGFTGTHCETLMPLCWSKPCHNNATCEDSVDNYTCHCWPGYTGAQCEIDLNECNSNPCQSNGECVELSSEKQYGRITGLPSSFSYHEASGYVCICQPGFTGIHCEEDVNECSSNPCQNGGTCENLPGNYTCHCPFDNLSRTFYGGRDCSDILLGCTHQQCLNNGTCIPHFQDGQHGFSCLCPSGYTGSLCEIATTLSFEGDGFLWVKSGSVTTKGSVCNIALRFQTVQPMALLLFRSNRDVFVKLELLSGYIHLSIQVNNQSKVLLFISHNTSDGEWHFVEVIFAEAVTLTLIDDSCKEKCIAKAPTPLESDQSICAFQNSFLGGLPVGMTSNGVALLNFYNMPSTPSFVGCLQDIKIDWNHITLENISSGSSLNVKAGCVRKDWCESQPCQSRGRCINLWLSYQCDCHRPYEGPNCLREYVAGRFGQDDSTGYVIFTLDESYGDTISLSMFVRTLQPSGLLLALENSTYQYIRVWLERGRLAMLTPNSPKLVVKFVLNDGNVHLISLKIKPYKIELYQSSQNLGFISASTWKIEKGDVIYIGGLPDKQETELNGGFFKGCIQDVRLNNQNLEFFPNPTNNASLNPVLVNVTQGCAGDNSCKSNPCHNGGVCHSRWDDFSCSCPALTSGKACEEVQWCGFSPCPHGAQCQPVLQGFECIANAVFNGQSGQILFRSNGNITRELTNITFGFRTRDANVIILHAEKEPEFLNISIQDSRLFFQLQSGNSFYMLSLTSLQSVNDGTWHEVTLSMTDPLSQTSRWQMEVDNETPFVTSTIATGSLNFLKDNTDIYVGDRAIDNIKGLQGCLSTIEIGGIYLSYFENVHGFINKPQEEQFLKISTNSVVTGCLQLNVCNSNPCLHGGNCEDIYSSYHCSCPLGWSGKHCELNIDECFSNPCIHGNCSDRVAAYHCTCEPGYTGVNCEVDIDNCQSHQCANGATCISHTNGYSCLCFGNFTGKFCRQSRLPSTVCGNEKTNLTCYNGGNCTEFQTELKCMCRPGFTGEWCEKDIDECASDPCVNGGLCQDLLNKFQCLCDVAFAGERCEVDLADDLISDIFTTIGSVTVALLLILLLAIVASVVTSNKRATQGTYSPSRQEKEGSRVEMWNLMPPPAMERLI</sequence>
<feature type="signal peptide" evidence="3">
    <location>
        <begin position="1"/>
        <end position="25"/>
    </location>
</feature>
<feature type="chain" id="PRO_0000007500" description="Protein crumbs homolog 1">
    <location>
        <begin position="26"/>
        <end position="1406"/>
    </location>
</feature>
<feature type="topological domain" description="Extracellular" evidence="3">
    <location>
        <begin position="26"/>
        <end position="1347"/>
    </location>
</feature>
<feature type="transmembrane region" description="Helical" evidence="3">
    <location>
        <begin position="1348"/>
        <end position="1368"/>
    </location>
</feature>
<feature type="topological domain" description="Cytoplasmic" evidence="3">
    <location>
        <begin position="1369"/>
        <end position="1406"/>
    </location>
</feature>
<feature type="domain" description="EGF-like 1" evidence="4">
    <location>
        <begin position="30"/>
        <end position="68"/>
    </location>
</feature>
<feature type="domain" description="EGF-like 2" evidence="4">
    <location>
        <begin position="70"/>
        <end position="108"/>
    </location>
</feature>
<feature type="domain" description="EGF-like 3" evidence="4">
    <location>
        <begin position="110"/>
        <end position="146"/>
    </location>
</feature>
<feature type="domain" description="EGF-like 4; calcium-binding" evidence="4">
    <location>
        <begin position="148"/>
        <end position="184"/>
    </location>
</feature>
<feature type="domain" description="EGF-like 5; calcium-binding" evidence="4">
    <location>
        <begin position="186"/>
        <end position="222"/>
    </location>
</feature>
<feature type="domain" description="EGF-like 6; calcium-binding" evidence="4">
    <location>
        <begin position="224"/>
        <end position="260"/>
    </location>
</feature>
<feature type="domain" description="EGF-like 7; calcium-binding" evidence="4">
    <location>
        <begin position="262"/>
        <end position="299"/>
    </location>
</feature>
<feature type="domain" description="EGF-like 8" evidence="4">
    <location>
        <begin position="301"/>
        <end position="337"/>
    </location>
</feature>
<feature type="domain" description="EGF-like 9" evidence="4">
    <location>
        <begin position="339"/>
        <end position="395"/>
    </location>
</feature>
<feature type="domain" description="EGF-like 10; calcium-binding" evidence="4">
    <location>
        <begin position="397"/>
        <end position="439"/>
    </location>
</feature>
<feature type="domain" description="EGF-like 11" evidence="4">
    <location>
        <begin position="441"/>
        <end position="481"/>
    </location>
</feature>
<feature type="domain" description="Laminin G-like 1" evidence="5">
    <location>
        <begin position="485"/>
        <end position="670"/>
    </location>
</feature>
<feature type="domain" description="EGF-like 12" evidence="4">
    <location>
        <begin position="672"/>
        <end position="708"/>
    </location>
</feature>
<feature type="domain" description="Laminin G-like 2" evidence="5">
    <location>
        <begin position="714"/>
        <end position="885"/>
    </location>
</feature>
<feature type="domain" description="EGF-like 13" evidence="4">
    <location>
        <begin position="887"/>
        <end position="923"/>
    </location>
</feature>
<feature type="domain" description="EGF-like 14" evidence="4">
    <location>
        <begin position="924"/>
        <end position="960"/>
    </location>
</feature>
<feature type="domain" description="Laminin G-like 3" evidence="5">
    <location>
        <begin position="950"/>
        <end position="1137"/>
    </location>
</feature>
<feature type="domain" description="EGF-like 15" evidence="4">
    <location>
        <begin position="1139"/>
        <end position="1175"/>
    </location>
</feature>
<feature type="domain" description="EGF-like 16; calcium-binding" evidence="4">
    <location>
        <begin position="1177"/>
        <end position="1212"/>
    </location>
</feature>
<feature type="domain" description="EGF-like 17" evidence="4">
    <location>
        <begin position="1214"/>
        <end position="1250"/>
    </location>
</feature>
<feature type="domain" description="EGF-like 18" evidence="4">
    <location>
        <begin position="1255"/>
        <end position="1295"/>
    </location>
</feature>
<feature type="domain" description="EGF-like 19; calcium-binding" evidence="4">
    <location>
        <begin position="1297"/>
        <end position="1333"/>
    </location>
</feature>
<feature type="region of interest" description="Interaction with EPB41L5" evidence="25">
    <location>
        <begin position="1370"/>
        <end position="1406"/>
    </location>
</feature>
<feature type="glycosylation site" description="N-linked (GlcNAc...) asparagine" evidence="3">
    <location>
        <position position="30"/>
    </location>
</feature>
<feature type="glycosylation site" description="N-linked (GlcNAc...) asparagine" evidence="3">
    <location>
        <position position="41"/>
    </location>
</feature>
<feature type="glycosylation site" description="N-linked (GlcNAc...) asparagine" evidence="3">
    <location>
        <position position="42"/>
    </location>
</feature>
<feature type="glycosylation site" description="N-linked (GlcNAc...) asparagine" evidence="3">
    <location>
        <position position="215"/>
    </location>
</feature>
<feature type="glycosylation site" description="N-linked (GlcNAc...) asparagine" evidence="3">
    <location>
        <position position="287"/>
    </location>
</feature>
<feature type="glycosylation site" description="N-linked (GlcNAc...) asparagine" evidence="3">
    <location>
        <position position="313"/>
    </location>
</feature>
<feature type="glycosylation site" description="N-linked (GlcNAc...) asparagine" evidence="3">
    <location>
        <position position="322"/>
    </location>
</feature>
<feature type="glycosylation site" description="N-linked (GlcNAc...) asparagine" evidence="3">
    <location>
        <position position="418"/>
    </location>
</feature>
<feature type="glycosylation site" description="N-linked (GlcNAc...) asparagine" evidence="3">
    <location>
        <position position="427"/>
    </location>
</feature>
<feature type="glycosylation site" description="N-linked (GlcNAc...) asparagine" evidence="3">
    <location>
        <position position="453"/>
    </location>
</feature>
<feature type="glycosylation site" description="N-linked (GlcNAc...) asparagine" evidence="3">
    <location>
        <position position="550"/>
    </location>
</feature>
<feature type="glycosylation site" description="N-linked (GlcNAc...) asparagine" evidence="3">
    <location>
        <position position="561"/>
    </location>
</feature>
<feature type="glycosylation site" description="N-linked (GlcNAc...) asparagine" evidence="3">
    <location>
        <position position="657"/>
    </location>
</feature>
<feature type="glycosylation site" description="N-linked (GlcNAc...) asparagine" evidence="3">
    <location>
        <position position="757"/>
    </location>
</feature>
<feature type="glycosylation site" description="N-linked (GlcNAc...) asparagine" evidence="3">
    <location>
        <position position="871"/>
    </location>
</feature>
<feature type="glycosylation site" description="N-linked (GlcNAc...) asparagine" evidence="3">
    <location>
        <position position="880"/>
    </location>
</feature>
<feature type="glycosylation site" description="N-linked (GlcNAc...) asparagine" evidence="3">
    <location>
        <position position="968"/>
    </location>
</feature>
<feature type="glycosylation site" description="N-linked (GlcNAc...) asparagine" evidence="3">
    <location>
        <position position="975"/>
    </location>
</feature>
<feature type="glycosylation site" description="N-linked (GlcNAc...) asparagine" evidence="3">
    <location>
        <position position="1000"/>
    </location>
</feature>
<feature type="glycosylation site" description="N-linked (GlcNAc...) asparagine" evidence="3">
    <location>
        <position position="1190"/>
    </location>
</feature>
<feature type="glycosylation site" description="N-linked (GlcNAc...) asparagine" evidence="3">
    <location>
        <position position="1243"/>
    </location>
</feature>
<feature type="glycosylation site" description="N-linked (GlcNAc...) asparagine" evidence="3">
    <location>
        <position position="1265"/>
    </location>
</feature>
<feature type="glycosylation site" description="N-linked (GlcNAc...) asparagine" evidence="3">
    <location>
        <position position="1273"/>
    </location>
</feature>
<feature type="disulfide bond" evidence="1">
    <location>
        <begin position="34"/>
        <end position="45"/>
    </location>
</feature>
<feature type="disulfide bond" evidence="1">
    <location>
        <begin position="39"/>
        <end position="54"/>
    </location>
</feature>
<feature type="disulfide bond" evidence="1">
    <location>
        <begin position="56"/>
        <end position="67"/>
    </location>
</feature>
<feature type="disulfide bond" evidence="1">
    <location>
        <begin position="74"/>
        <end position="85"/>
    </location>
</feature>
<feature type="disulfide bond" evidence="1">
    <location>
        <begin position="79"/>
        <end position="96"/>
    </location>
</feature>
<feature type="disulfide bond" evidence="1">
    <location>
        <begin position="98"/>
        <end position="107"/>
    </location>
</feature>
<feature type="disulfide bond" evidence="1">
    <location>
        <begin position="114"/>
        <end position="125"/>
    </location>
</feature>
<feature type="disulfide bond" evidence="1">
    <location>
        <begin position="119"/>
        <end position="134"/>
    </location>
</feature>
<feature type="disulfide bond" evidence="1">
    <location>
        <begin position="136"/>
        <end position="145"/>
    </location>
</feature>
<feature type="disulfide bond" evidence="1">
    <location>
        <begin position="152"/>
        <end position="163"/>
    </location>
</feature>
<feature type="disulfide bond" evidence="1">
    <location>
        <begin position="157"/>
        <end position="172"/>
    </location>
</feature>
<feature type="disulfide bond" evidence="1">
    <location>
        <begin position="174"/>
        <end position="183"/>
    </location>
</feature>
<feature type="disulfide bond" evidence="1">
    <location>
        <begin position="190"/>
        <end position="201"/>
    </location>
</feature>
<feature type="disulfide bond" evidence="1">
    <location>
        <begin position="195"/>
        <end position="210"/>
    </location>
</feature>
<feature type="disulfide bond" evidence="1">
    <location>
        <begin position="212"/>
        <end position="221"/>
    </location>
</feature>
<feature type="disulfide bond" evidence="1">
    <location>
        <begin position="228"/>
        <end position="239"/>
    </location>
</feature>
<feature type="disulfide bond" evidence="1">
    <location>
        <begin position="233"/>
        <end position="248"/>
    </location>
</feature>
<feature type="disulfide bond" evidence="1">
    <location>
        <begin position="250"/>
        <end position="259"/>
    </location>
</feature>
<feature type="disulfide bond" evidence="1">
    <location>
        <begin position="266"/>
        <end position="277"/>
    </location>
</feature>
<feature type="disulfide bond" evidence="1">
    <location>
        <begin position="271"/>
        <end position="286"/>
    </location>
</feature>
<feature type="disulfide bond" evidence="1">
    <location>
        <begin position="288"/>
        <end position="298"/>
    </location>
</feature>
<feature type="disulfide bond" evidence="1">
    <location>
        <begin position="305"/>
        <end position="316"/>
    </location>
</feature>
<feature type="disulfide bond" evidence="1">
    <location>
        <begin position="310"/>
        <end position="325"/>
    </location>
</feature>
<feature type="disulfide bond" evidence="1">
    <location>
        <begin position="327"/>
        <end position="336"/>
    </location>
</feature>
<feature type="disulfide bond" evidence="1">
    <location>
        <begin position="343"/>
        <end position="354"/>
    </location>
</feature>
<feature type="disulfide bond" evidence="1">
    <location>
        <begin position="348"/>
        <end position="383"/>
    </location>
</feature>
<feature type="disulfide bond" evidence="1">
    <location>
        <begin position="385"/>
        <end position="394"/>
    </location>
</feature>
<feature type="disulfide bond" evidence="1">
    <location>
        <begin position="401"/>
        <end position="412"/>
    </location>
</feature>
<feature type="disulfide bond" evidence="1">
    <location>
        <begin position="406"/>
        <end position="421"/>
    </location>
</feature>
<feature type="disulfide bond" evidence="1">
    <location>
        <begin position="423"/>
        <end position="438"/>
    </location>
</feature>
<feature type="disulfide bond" evidence="1">
    <location>
        <begin position="445"/>
        <end position="456"/>
    </location>
</feature>
<feature type="disulfide bond" evidence="1">
    <location>
        <begin position="450"/>
        <end position="469"/>
    </location>
</feature>
<feature type="disulfide bond" evidence="1">
    <location>
        <begin position="471"/>
        <end position="480"/>
    </location>
</feature>
<feature type="disulfide bond" evidence="1">
    <location>
        <begin position="642"/>
        <end position="670"/>
    </location>
</feature>
<feature type="disulfide bond" evidence="1">
    <location>
        <begin position="676"/>
        <end position="687"/>
    </location>
</feature>
<feature type="disulfide bond" evidence="1">
    <location>
        <begin position="681"/>
        <end position="696"/>
    </location>
</feature>
<feature type="disulfide bond" evidence="1">
    <location>
        <begin position="698"/>
        <end position="707"/>
    </location>
</feature>
<feature type="disulfide bond" evidence="1">
    <location>
        <begin position="851"/>
        <end position="885"/>
    </location>
</feature>
<feature type="disulfide bond" evidence="1">
    <location>
        <begin position="891"/>
        <end position="902"/>
    </location>
</feature>
<feature type="disulfide bond" evidence="1">
    <location>
        <begin position="896"/>
        <end position="911"/>
    </location>
</feature>
<feature type="disulfide bond" evidence="1">
    <location>
        <begin position="913"/>
        <end position="922"/>
    </location>
</feature>
<feature type="disulfide bond" evidence="1">
    <location>
        <begin position="928"/>
        <end position="939"/>
    </location>
</feature>
<feature type="disulfide bond" evidence="1">
    <location>
        <begin position="933"/>
        <end position="948"/>
    </location>
</feature>
<feature type="disulfide bond" evidence="1">
    <location>
        <begin position="1096"/>
        <end position="1137"/>
    </location>
</feature>
<feature type="disulfide bond" evidence="1">
    <location>
        <begin position="1143"/>
        <end position="1154"/>
    </location>
</feature>
<feature type="disulfide bond" evidence="1">
    <location>
        <begin position="1148"/>
        <end position="1163"/>
    </location>
</feature>
<feature type="disulfide bond" evidence="1">
    <location>
        <begin position="1165"/>
        <end position="1174"/>
    </location>
</feature>
<feature type="disulfide bond" evidence="1">
    <location>
        <begin position="1181"/>
        <end position="1191"/>
    </location>
</feature>
<feature type="disulfide bond" evidence="1">
    <location>
        <begin position="1186"/>
        <end position="1200"/>
    </location>
</feature>
<feature type="disulfide bond" evidence="1">
    <location>
        <begin position="1202"/>
        <end position="1211"/>
    </location>
</feature>
<feature type="disulfide bond" evidence="1">
    <location>
        <begin position="1218"/>
        <end position="1229"/>
    </location>
</feature>
<feature type="disulfide bond" evidence="1">
    <location>
        <begin position="1223"/>
        <end position="1238"/>
    </location>
</feature>
<feature type="disulfide bond" evidence="1">
    <location>
        <begin position="1240"/>
        <end position="1249"/>
    </location>
</feature>
<feature type="disulfide bond" evidence="1">
    <location>
        <begin position="1259"/>
        <end position="1274"/>
    </location>
</feature>
<feature type="disulfide bond" evidence="1">
    <location>
        <begin position="1268"/>
        <end position="1283"/>
    </location>
</feature>
<feature type="disulfide bond" evidence="1">
    <location>
        <begin position="1285"/>
        <end position="1294"/>
    </location>
</feature>
<feature type="disulfide bond" evidence="1">
    <location>
        <begin position="1301"/>
        <end position="1312"/>
    </location>
</feature>
<feature type="disulfide bond" evidence="1">
    <location>
        <begin position="1306"/>
        <end position="1321"/>
    </location>
</feature>
<feature type="disulfide bond" evidence="1">
    <location>
        <begin position="1323"/>
        <end position="1332"/>
    </location>
</feature>
<feature type="splice variant" id="VSP_014724" description="In isoform 4." evidence="45">
    <location>
        <begin position="1"/>
        <end position="351"/>
    </location>
</feature>
<feature type="splice variant" id="VSP_014725" description="In isoform 3." evidence="44">
    <location>
        <begin position="218"/>
        <end position="329"/>
    </location>
</feature>
<feature type="splice variant" id="VSP_014726" description="In isoform 4." evidence="45">
    <original>GECVELSSEKQYGRITGLPSSFSYHEASGYVCICQPGFT</original>
    <variation>MIRNSLCQPSRCLDEYLFFNRKMFGARTHGFHILMAMLI</variation>
    <location>
        <begin position="352"/>
        <end position="390"/>
    </location>
</feature>
<feature type="splice variant" id="VSP_045332" description="In isoform 5." evidence="43">
    <location>
        <begin position="710"/>
        <end position="1245"/>
    </location>
</feature>
<feature type="splice variant" id="VSP_014727" description="In isoform 4." evidence="45">
    <location>
        <begin position="1294"/>
        <end position="1406"/>
    </location>
</feature>
<feature type="splice variant" id="VSP_014728" description="In isoform 2." evidence="41 42">
    <original>LADDLISDIFTTIGSVTVALLLILLLAIVASVVTSNKRATQ</original>
    <variation>VSSLSFYVSLLFWQNLFQLLSYLILRMNDEPVVEWGEQEDY</variation>
    <location>
        <begin position="1336"/>
        <end position="1376"/>
    </location>
</feature>
<feature type="splice variant" id="VSP_014729" description="In isoform 2." evidence="41 42">
    <location>
        <begin position="1377"/>
        <end position="1406"/>
    </location>
</feature>
<feature type="sequence variant" id="VAR_064180" description="In RP12; dbSNP:rs1460946384." evidence="29">
    <original>C</original>
    <variation>F</variation>
    <location>
        <position position="27"/>
    </location>
</feature>
<feature type="sequence variant" id="VAR_067125" description="In RP12; dbSNP:rs145141811." evidence="31">
    <original>C</original>
    <variation>W</variation>
    <location>
        <position position="45"/>
    </location>
</feature>
<feature type="sequence variant" id="VAR_022941" description="In LCA8; dbSNP:rs62636262." evidence="7">
    <original>F</original>
    <variation>V</variation>
    <location>
        <position position="144"/>
    </location>
</feature>
<feature type="sequence variant" id="VAR_067126" description="In RP12." evidence="33">
    <original>C</original>
    <variation>S</variation>
    <location>
        <position position="157"/>
    </location>
</feature>
<feature type="sequence variant" id="VAR_011641" description="In RP12; dbSNP:rs62635651." evidence="6">
    <original>A</original>
    <variation>V</variation>
    <location>
        <position position="161"/>
    </location>
</feature>
<feature type="sequence variant" id="VAR_022942" description="In PPCRA; dbSNP:rs137853138." evidence="16">
    <original>V</original>
    <variation>M</variation>
    <location>
        <position position="162"/>
    </location>
</feature>
<feature type="sequence variant" id="VAR_067127" description="In RP12.">
    <location>
        <begin position="165"/>
        <end position="167"/>
    </location>
</feature>
<feature type="sequence variant" id="VAR_022943" description="In RP12; dbSNP:rs764256655." evidence="15">
    <original>C</original>
    <variation>F</variation>
    <location>
        <position position="195"/>
    </location>
</feature>
<feature type="sequence variant" id="VAR_022944" description="In LCA8; uncertain significance; dbSNP:rs62645749." evidence="13 15 33">
    <original>I</original>
    <variation>T</variation>
    <location>
        <position position="205"/>
    </location>
</feature>
<feature type="sequence variant" id="VAR_067128" description="In dbSNP:rs114846212." evidence="34">
    <original>E</original>
    <variation>K</variation>
    <location>
        <position position="222"/>
    </location>
</feature>
<feature type="sequence variant" id="VAR_011642" description="In RP12; dbSNP:rs62635652." evidence="6 33">
    <original>C</original>
    <variation>W</variation>
    <location>
        <position position="250"/>
    </location>
</feature>
<feature type="sequence variant" id="VAR_022945" description="In dbSNP:rs62636263." evidence="7 8 13 24 34">
    <original>T</original>
    <variation>M</variation>
    <location>
        <position position="289"/>
    </location>
</feature>
<feature type="sequence variant" id="VAR_067129" description="Found in patients with early-onset retinal dystrophy; likely pathogenic; dbSNP:rs779835125." evidence="32">
    <original>C</original>
    <variation>Y</variation>
    <location>
        <position position="310"/>
    </location>
</feature>
<feature type="sequence variant" id="VAR_067130" description="In RP12; dbSNP:rs1659841571." evidence="33">
    <original>N</original>
    <variation>K</variation>
    <location>
        <position position="312"/>
    </location>
</feature>
<feature type="sequence variant" id="VAR_079622" description="In LCA8." evidence="39">
    <location>
        <begin position="328"/>
        <end position="1406"/>
    </location>
</feature>
<feature type="sequence variant" id="VAR_067131" description="In LCA8; dbSNP:rs587783015." evidence="27">
    <original>G</original>
    <variation>D</variation>
    <location>
        <position position="333"/>
    </location>
</feature>
<feature type="sequence variant" id="VAR_022946" description="In LCA8; dbSNP:rs62645754." evidence="7">
    <original>C</original>
    <variation>Y</variation>
    <location>
        <position position="383"/>
    </location>
</feature>
<feature type="sequence variant" id="VAR_022947" description="In RP12; dbSNP:rs62636288." evidence="8">
    <original>Y</original>
    <variation>C</variation>
    <location>
        <position position="433"/>
    </location>
</feature>
<feature type="sequence variant" id="VAR_067132" description="In LCA8; dbSNP:rs1571522690." evidence="24">
    <original>C</original>
    <variation>Y</variation>
    <location>
        <position position="438"/>
    </location>
</feature>
<feature type="sequence variant" id="VAR_067133" description="In LCA8; dbSNP:rs954595597." evidence="20">
    <original>G</original>
    <variation>R</variation>
    <location>
        <position position="454"/>
    </location>
</feature>
<feature type="sequence variant" id="VAR_079623" description="Found in patients with rod-cone retinal dystrophy; likely pathogenic; dbSNP:rs963201816." evidence="39">
    <original>L</original>
    <variation>P</variation>
    <location>
        <position position="479"/>
    </location>
</feature>
<feature type="sequence variant" id="VAR_022948" description="In LCA8." evidence="7">
    <original>C</original>
    <variation>G</variation>
    <location>
        <position position="480"/>
    </location>
</feature>
<feature type="sequence variant" id="VAR_022949" description="In LCA8; dbSNP:rs62636264." evidence="7 19">
    <original>C</original>
    <variation>R</variation>
    <location>
        <position position="480"/>
    </location>
</feature>
<feature type="sequence variant" id="VAR_067134" description="In dbSNP:rs777377174." evidence="19">
    <original>F</original>
    <variation>S</variation>
    <location>
        <position position="488"/>
    </location>
</feature>
<feature type="sequence variant" id="VAR_067135" description="Found in a patient with early-onset retinal dystrophy; uncertain significance; dbSNP:rs1664299898." evidence="32">
    <original>D</original>
    <variation>V</variation>
    <location>
        <position position="491"/>
    </location>
</feature>
<feature type="sequence variant" id="VAR_068363" description="In RP12." evidence="38">
    <original>K</original>
    <variation>N</variation>
    <location>
        <position position="534"/>
    </location>
</feature>
<feature type="sequence variant" id="VAR_067136" description="In LCA8; dbSNP:rs113082791." evidence="23">
    <original>L</original>
    <variation>P</variation>
    <location>
        <position position="535"/>
    </location>
</feature>
<feature type="sequence variant" id="VAR_067137" description="In LCA8." evidence="22">
    <original>D</original>
    <variation>Y</variation>
    <location>
        <position position="564"/>
    </location>
</feature>
<feature type="sequence variant" id="VAR_022950" description="In RP12; dbSNP:rs1266363944." evidence="15">
    <original>V</original>
    <variation>E</variation>
    <location>
        <position position="578"/>
    </location>
</feature>
<feature type="sequence variant" id="VAR_022951" description="In LCA8; dbSNP:rs1664322968." evidence="14 36">
    <original>D</original>
    <variation>Y</variation>
    <location>
        <position position="584"/>
    </location>
</feature>
<feature type="sequence variant" id="VAR_022952" description="In RP12; dbSNP:rs1471328495." evidence="15">
    <original>C</original>
    <variation>Y</variation>
    <location>
        <position position="587"/>
    </location>
</feature>
<feature type="sequence variant" id="VAR_067138" description="In LCA8; uncertain significance." evidence="34">
    <original>S</original>
    <variation>P</variation>
    <location>
        <position position="635"/>
    </location>
</feature>
<feature type="sequence variant" id="VAR_067139" description="In RP12." evidence="33">
    <original>W</original>
    <variation>C</variation>
    <location>
        <position position="675"/>
    </location>
</feature>
<feature type="sequence variant" id="VAR_022953" description="In dbSNP:rs62636286." evidence="13">
    <original>Q</original>
    <variation>E</variation>
    <location>
        <position position="679"/>
    </location>
</feature>
<feature type="sequence variant" id="VAR_022954" description="In LCA8; dbSNP:rs62636266." evidence="7 19">
    <original>C</original>
    <variation>Y</variation>
    <location>
        <position position="681"/>
    </location>
</feature>
<feature type="sequence variant" id="VAR_022955" description="In LCA8; dbSNP:rs62645755." evidence="14">
    <original>E</original>
    <variation>Q</variation>
    <location>
        <position position="710"/>
    </location>
</feature>
<feature type="sequence variant" id="VAR_067140" description="In RP12; dbSNP:rs145282040." evidence="31 33">
    <original>E</original>
    <variation>V</variation>
    <location>
        <position position="710"/>
    </location>
</feature>
<feature type="sequence variant" id="VAR_067141" description="In RP12; dbSNP:rs1664649015." evidence="36">
    <original>S</original>
    <variation>F</variation>
    <location>
        <position position="740"/>
    </location>
</feature>
<feature type="sequence variant" id="VAR_022956" description="In LCA8; also found in patients with early-onset rod-cone retinal dystrophy; dbSNP:rs62636267." evidence="14 33 34 36">
    <original>M</original>
    <variation>T</variation>
    <location>
        <position position="741"/>
    </location>
</feature>
<feature type="sequence variant" id="VAR_011643" description="In RP12 and LCA8; dbSNP:rs28939720." evidence="6 14 15 21 24 31 33 38">
    <original>T</original>
    <variation>M</variation>
    <location>
        <position position="745"/>
    </location>
</feature>
<feature type="sequence variant" id="VAR_022957" description="In RP12 and LCA8; dbSNP:rs62635653." evidence="12 13">
    <location>
        <position position="749"/>
    </location>
</feature>
<feature type="sequence variant" id="VAR_067142" description="In LCA8; dbSNP:rs896160584." evidence="17 19">
    <original>L</original>
    <variation>P</variation>
    <location>
        <position position="753"/>
    </location>
</feature>
<feature type="sequence variant" id="VAR_011644" description="In RP12 and LCA8; dbSNP:rs62635654." evidence="6 7 8 12 14 15 17 19 32 33">
    <original>R</original>
    <variation>C</variation>
    <location>
        <position position="764"/>
    </location>
</feature>
<feature type="sequence variant" id="VAR_079624" description="Found in a patient with early-onset retinal dystrophy; uncertain significance; dbSNP:rs375040930." evidence="39">
    <original>R</original>
    <variation>H</variation>
    <location>
        <position position="764"/>
    </location>
</feature>
<feature type="sequence variant" id="VAR_022958" description="In dbSNP:rs62636287." evidence="13 27 31">
    <original>R</original>
    <variation>H</variation>
    <location>
        <position position="769"/>
    </location>
</feature>
<feature type="sequence variant" id="VAR_022959" evidence="7">
    <original>R</original>
    <variation>Q</variation>
    <location>
        <position position="769"/>
    </location>
</feature>
<feature type="sequence variant" id="VAR_067143" description="In early-onset retinal dystrophy; likely pathogenic; dbSNP:rs1433518605." evidence="36">
    <location>
        <position position="789"/>
    </location>
</feature>
<feature type="sequence variant" id="VAR_067144" description="In dbSNP:rs142857810." evidence="8">
    <original>T</original>
    <variation>M</variation>
    <location>
        <position position="821"/>
    </location>
</feature>
<feature type="sequence variant" id="VAR_022960" description="In RP12; dbSNP:rs116471343." evidence="15 33 36 39">
    <original>P</original>
    <variation>T</variation>
    <location>
        <position position="836"/>
    </location>
</feature>
<feature type="sequence variant" id="VAR_022961" description="In RP12; located on the same allele as T-1354; dbSNP:rs62636289." evidence="8">
    <original>D</original>
    <variation>H</variation>
    <location>
        <position position="837"/>
    </location>
</feature>
<feature type="sequence variant" id="VAR_022962" description="In RP12; dbSNP:rs539189291." evidence="11 33">
    <original>G</original>
    <variation>R</variation>
    <location>
        <position position="846"/>
    </location>
</feature>
<feature type="sequence variant" id="VAR_022963" description="In RP12 and LCA8; dbSNP:rs776591659." evidence="15 31 33">
    <original>G</original>
    <variation>S</variation>
    <location>
        <position position="850"/>
    </location>
</feature>
<feature type="sequence variant" id="VAR_022964" description="In LCA8; dbSNP:rs62636271." evidence="14 24">
    <original>I</original>
    <variation>T</variation>
    <location>
        <position position="852"/>
    </location>
</feature>
<feature type="sequence variant" id="VAR_022965" description="In RP12; without preservation of the paraarteriolar retinal pigment epithelium; dbSNP:rs62635658." evidence="13">
    <original>C</original>
    <variation>G</variation>
    <location>
        <position position="891"/>
    </location>
</feature>
<feature type="sequence variant" id="VAR_022966" description="Found in patients with retinitis pigmentosa; uncertain significance; heterozygous; dbSNP:rs62636290." evidence="8 40">
    <original>N</original>
    <variation>S</variation>
    <location>
        <position position="894"/>
    </location>
</feature>
<feature type="sequence variant" id="VAR_067145" description="In RP12; uncertain significance." evidence="31">
    <original>V</original>
    <variation>I</variation>
    <location>
        <position position="901"/>
    </location>
</feature>
<feature type="sequence variant" id="VAR_022967" description="In dbSNP:rs114052315." evidence="15">
    <original>R</original>
    <variation>Q</variation>
    <location>
        <position position="905"/>
    </location>
</feature>
<feature type="sequence variant" id="VAR_079625" description="Found in patients with rod-cone retinal dystrophy; likely pathogenic." evidence="39">
    <original>A</original>
    <variation>P</variation>
    <location>
        <position position="921"/>
    </location>
</feature>
<feature type="sequence variant" id="VAR_067146" description="In LCA8; uncertain significance; dbSNP:rs114630940." evidence="27">
    <original>A</original>
    <variation>T</variation>
    <location>
        <position position="937"/>
    </location>
</feature>
<feature type="sequence variant" id="VAR_067147" description="In LCA8; dbSNP:rs1411345985." evidence="26">
    <original>C</original>
    <variation>Y</variation>
    <location>
        <position position="939"/>
    </location>
</feature>
<feature type="sequence variant" id="VAR_079626" description="In LCA8; dbSNP:rs62645747." evidence="39">
    <original>C</original>
    <variation>R</variation>
    <location>
        <position position="948"/>
    </location>
</feature>
<feature type="sequence variant" id="VAR_011645" description="In RP12 and LCA8; without preservation of the paraarteriolar retinal pigment epithelium; dbSNP:rs62645748." evidence="6 7 8 12 13 14 15 17 19 26 31 32 33 36 39">
    <original>C</original>
    <variation>Y</variation>
    <location>
        <position position="948"/>
    </location>
</feature>
<feature type="sequence variant" id="VAR_022968" description="In RP12; uncertain significance; dbSNP:rs557111131." evidence="15">
    <original>G</original>
    <variation>S</variation>
    <location>
        <position position="959"/>
    </location>
</feature>
<feature type="sequence variant" id="VAR_022969" description="In RP12; without preservation of the paraarteriolar retinal pigment epithelium." evidence="13">
    <location>
        <position position="962"/>
    </location>
</feature>
<feature type="sequence variant" id="VAR_022970" description="In RP12." evidence="15">
    <original>N</original>
    <variation>I</variation>
    <location>
        <position position="986"/>
    </location>
</feature>
<feature type="sequence variant" id="VAR_022971" description="In LCA8." evidence="11">
    <original>I</original>
    <variation>T</variation>
    <location>
        <position position="989"/>
    </location>
</feature>
<feature type="sequence variant" id="VAR_067148" description="In LCA8; dbSNP:rs1409740542." evidence="33">
    <original>I</original>
    <variation>T</variation>
    <location>
        <position position="1003"/>
    </location>
</feature>
<feature type="sequence variant" id="VAR_067149" description="In RP12." evidence="33">
    <original>L</original>
    <variation>S</variation>
    <location>
        <position position="1012"/>
    </location>
</feature>
<feature type="sequence variant" id="VAR_022972" description="In LCA8; dbSNP:rs62636274." evidence="14">
    <original>S</original>
    <variation>I</variation>
    <location>
        <position position="1025"/>
    </location>
</feature>
<feature type="sequence variant" id="VAR_067150" description="In RP12; dbSNP:rs62636274." evidence="33">
    <original>S</original>
    <variation>N</variation>
    <location>
        <position position="1025"/>
    </location>
</feature>
<feature type="sequence variant" id="VAR_079627" description="Found in patients with rod-cone retinal dystrophy; likely pathogenic; dbSNP:rs2125499421." evidence="39">
    <original>D</original>
    <variation>N</variation>
    <location>
        <position position="1031"/>
    </location>
</feature>
<feature type="sequence variant" id="VAR_011646" description="In RP12; dbSNP:rs62635656." evidence="6">
    <original>M</original>
    <variation>T</variation>
    <location>
        <position position="1041"/>
    </location>
</feature>
<feature type="sequence variant" id="VAR_011647" description="In RP12; dbSNP:rs62635657." evidence="6 11">
    <original>L</original>
    <variation>P</variation>
    <location>
        <position position="1071"/>
    </location>
</feature>
<feature type="sequence variant" id="VAR_067151" description="In RP12; dbSNP:rs1665082656." evidence="35">
    <original>T</original>
    <variation>K</variation>
    <location>
        <position position="1099"/>
    </location>
</feature>
<feature type="sequence variant" id="VAR_011648" description="In LCA8; dbSNP:rs62635659." evidence="8">
    <original>I</original>
    <variation>R</variation>
    <location>
        <position position="1100"/>
    </location>
</feature>
<feature type="sequence variant" id="VAR_022973" description="In RP12; dbSNP:rs62635659." evidence="13 15">
    <original>I</original>
    <variation>T</variation>
    <location>
        <position position="1100"/>
    </location>
</feature>
<feature type="sequence variant" id="VAR_022974" description="In LCA8 and RP12; dbSNP:rs62636275." evidence="14 24 28 33 36">
    <original>G</original>
    <variation>R</variation>
    <location>
        <position position="1103"/>
    </location>
</feature>
<feature type="sequence variant" id="VAR_022975" description="In LCA8; dbSNP:rs62636276." evidence="14 33">
    <original>L</original>
    <variation>P</variation>
    <location>
        <position position="1107"/>
    </location>
</feature>
<feature type="sequence variant" id="VAR_022976" description="In LCA8 and RP12; dbSNP:rs62636276." evidence="14 39">
    <original>L</original>
    <variation>R</variation>
    <location>
        <position position="1107"/>
    </location>
</feature>
<feature type="sequence variant" id="VAR_067152" description="In LCA8; dbSNP:rs1414707912." evidence="30">
    <original>Y</original>
    <variation>C</variation>
    <location>
        <position position="1161"/>
    </location>
</feature>
<feature type="sequence variant" id="VAR_064181" description="In RP12; dbSNP:rs1665099725." evidence="29">
    <original>C</original>
    <variation>W</variation>
    <location>
        <position position="1165"/>
    </location>
</feature>
<feature type="sequence variant" id="VAR_067153" description="In LCA8 and RP12; dbSNP:rs917768074." evidence="33">
    <original>C</original>
    <variation>G</variation>
    <location>
        <position position="1174"/>
    </location>
</feature>
<feature type="sequence variant" id="VAR_011649" description="In RP12; dbSNP:rs62636291." evidence="8">
    <original>C</original>
    <variation>R</variation>
    <location>
        <position position="1181"/>
    </location>
</feature>
<feature type="sequence variant" id="VAR_067154" description="Found in patients with early-onset retinal dystrophy; likely pathogenic." evidence="36">
    <original>Y</original>
    <variation>C</variation>
    <location>
        <position position="1198"/>
    </location>
</feature>
<feature type="sequence variant" id="VAR_022977" description="In LCA8; dbSNP:rs574742644." evidence="7">
    <original>G</original>
    <variation>R</variation>
    <location>
        <position position="1205"/>
    </location>
</feature>
<feature type="sequence variant" id="VAR_022978" description="In LCA8; dbSNP:rs1450635782." evidence="12">
    <original>C</original>
    <variation>F</variation>
    <location>
        <position position="1218"/>
    </location>
</feature>
<feature type="sequence variant" id="VAR_067155" description="Found in patients with early-onset retinal dystrophy; likely pathogenic." evidence="36">
    <original>C</original>
    <variation>S</variation>
    <location>
        <position position="1223"/>
    </location>
</feature>
<feature type="sequence variant" id="VAR_079628" description="In LCA8." evidence="39">
    <location>
        <begin position="1226"/>
        <end position="1406"/>
    </location>
</feature>
<feature type="sequence variant" id="VAR_067156" description="In RP12; dbSNP:rs1391910861." evidence="37">
    <original>P</original>
    <variation>L</variation>
    <location>
        <position position="1305"/>
    </location>
</feature>
<feature type="sequence variant" id="VAR_022979" description="In LCA8; dbSNP:rs62636281." evidence="7">
    <original>N</original>
    <variation>H</variation>
    <location>
        <position position="1317"/>
    </location>
</feature>
<feature type="sequence variant" id="VAR_022980" description="In LCA8; also early onset RP without preservation of the paraarteriolar retinal pigment epithelium; dbSNP:rs62635649." evidence="9 14">
    <original>C</original>
    <variation>S</variation>
    <location>
        <position position="1321"/>
    </location>
</feature>
<feature type="sequence variant" id="VAR_022981" description="In dbSNP:rs62636285." evidence="7 8 13">
    <original>R</original>
    <variation>H</variation>
    <location>
        <position position="1331"/>
    </location>
</feature>
<feature type="sequence variant" id="VAR_067157" description="In LCA8; dbSNP:rs377543137." evidence="26">
    <original>C</original>
    <variation>F</variation>
    <location>
        <position position="1332"/>
    </location>
</feature>
<feature type="sequence variant" id="VAR_022982" description="In RP12; located on the same allele as H-837; dbSNP:rs200469148." evidence="8">
    <original>A</original>
    <variation>T</variation>
    <location>
        <position position="1354"/>
    </location>
</feature>
<feature type="sequence variant" id="VAR_067158" description="Found in patients with early-onset retinal dystrophy; likely pathogenic." evidence="33">
    <original>A</original>
    <variation>D</variation>
    <location>
        <position position="1365"/>
    </location>
</feature>
<feature type="sequence variant" id="VAR_067159" description="In LCA8; dbSNP:rs1667264651." evidence="33">
    <original>P</original>
    <variation>L</variation>
    <location>
        <position position="1381"/>
    </location>
</feature>
<feature type="sequence variant" id="VAR_022983" description="In RP12; dbSNP:rs200573274." evidence="15 31">
    <original>R</original>
    <variation>H</variation>
    <location>
        <position position="1383"/>
    </location>
</feature>
<feature type="sequence variant" id="VAR_079629" description="Found in a patient with early-onset retinal dystrophy; uncertain significance." evidence="39">
    <location>
        <begin position="1390"/>
        <end position="1406"/>
    </location>
</feature>
<feature type="mutagenesis site" description="Abolishes interaction with EPB41L5. No effection on interaction wtih PALS1." evidence="25">
    <location>
        <begin position="1377"/>
        <end position="1379"/>
    </location>
</feature>
<feature type="mutagenesis site" description="Abolishes interaction with PALS1. Not required for interaction with EPB41L5." evidence="25">
    <location>
        <begin position="1403"/>
        <end position="1406"/>
    </location>
</feature>
<feature type="turn" evidence="48">
    <location>
        <begin position="1394"/>
        <end position="1396"/>
    </location>
</feature>
<feature type="strand" evidence="48">
    <location>
        <begin position="1403"/>
        <end position="1406"/>
    </location>
</feature>
<feature type="sequence variant" id="VAR_082818" description="Found in a patient with Leber congenital amaurosis; uncertain significance." evidence="46">
    <original>R</original>
    <variation>H</variation>
    <location sequence="P82279-2">
        <position position="1361"/>
    </location>
</feature>
<comment type="function">
    <text evidence="2">Plays a role in photoreceptor morphogenesis in the retina (By similarity). May maintain cell polarization and adhesion (By similarity).</text>
</comment>
<comment type="subunit">
    <text evidence="2 18 25">Component of a complex composed of PALS1, CRB1 and EPB41L5 (PubMed:17920587). Within the complex, interacts (via intracellular domain) with PALS1 and EPB41L5 (via FERM domain) (PubMed:17920587). Forms a complex with MPP4 and PALS1 (PubMed:15914641). Interacts with MPDZ/MUPP1 and MPP4 (By similarity).</text>
</comment>
<comment type="interaction">
    <interactant intactId="EBI-1048648">
        <id>P82279</id>
    </interactant>
    <interactant intactId="EBI-1047162">
        <id>Q9HCM4</id>
        <label>EPB41L5</label>
    </interactant>
    <organismsDiffer>false</organismsDiffer>
    <experiments>4</experiments>
</comment>
<comment type="interaction">
    <interactant intactId="EBI-1048648">
        <id>P82279</id>
    </interactant>
    <interactant intactId="EBI-2483346">
        <id>Q96JB8</id>
        <label>MPP4</label>
    </interactant>
    <organismsDiffer>false</organismsDiffer>
    <experiments>2</experiments>
</comment>
<comment type="interaction">
    <interactant intactId="EBI-1048648">
        <id>P82279</id>
    </interactant>
    <interactant intactId="EBI-2513978">
        <id>Q8N3R9</id>
        <label>PALS1</label>
    </interactant>
    <organismsDiffer>false</organismsDiffer>
    <experiments>5</experiments>
</comment>
<comment type="interaction">
    <interactant intactId="EBI-1048648">
        <id>P82279</id>
    </interactant>
    <interactant intactId="EBI-724390">
        <id>Q8NI35</id>
        <label>PATJ</label>
    </interactant>
    <organismsDiffer>false</organismsDiffer>
    <experiments>2</experiments>
</comment>
<comment type="interaction">
    <interactant intactId="EBI-1048648">
        <id>P82279</id>
    </interactant>
    <interactant intactId="EBI-26451934">
        <id>Q58CU2</id>
        <label>EPB41L5</label>
    </interactant>
    <organismsDiffer>true</organismsDiffer>
    <experiments>2</experiments>
</comment>
<comment type="interaction">
    <interactant intactId="EBI-1048648">
        <id>P82279</id>
    </interactant>
    <interactant intactId="EBI-26451960">
        <id>A0A3Q1LY00</id>
        <label>PALS1</label>
    </interactant>
    <organismsDiffer>true</organismsDiffer>
    <experiments>3</experiments>
</comment>
<comment type="subcellular location">
    <molecule>Isoform 1</molecule>
    <subcellularLocation>
        <location evidence="2">Apical cell membrane</location>
        <topology evidence="3">Single-pass type I membrane protein</topology>
    </subcellularLocation>
    <subcellularLocation>
        <location evidence="46">Secreted</location>
    </subcellularLocation>
    <subcellularLocation>
        <location evidence="2">Cell projection</location>
        <location evidence="2">Cilium</location>
        <location evidence="2">Photoreceptor outer segment</location>
    </subcellularLocation>
    <subcellularLocation>
        <location evidence="2">Photoreceptor inner segment</location>
    </subcellularLocation>
</comment>
<comment type="subcellular location">
    <molecule>Isoform 2</molecule>
    <subcellularLocation>
        <location>Secreted</location>
    </subcellularLocation>
</comment>
<comment type="alternative products">
    <event type="alternative splicing"/>
    <isoform>
        <id>P82279-1</id>
        <name>1</name>
        <sequence type="displayed"/>
    </isoform>
    <isoform>
        <id>P82279-2</id>
        <name>2</name>
        <sequence type="described" ref="VSP_014728 VSP_014729"/>
    </isoform>
    <isoform>
        <id>P82279-3</id>
        <name>3</name>
        <sequence type="described" ref="VSP_014725"/>
    </isoform>
    <isoform>
        <id>P82279-4</id>
        <name>4</name>
        <sequence type="described" ref="VSP_014724 VSP_014726 VSP_014727"/>
    </isoform>
    <isoform>
        <id>P82279-5</id>
        <name>5</name>
        <sequence type="described" ref="VSP_045332"/>
    </isoform>
</comment>
<comment type="tissue specificity">
    <text evidence="18">Preferential expression in retina, also expressed in brain, testis, fetal brain and fetal eye (PubMed:15914641). Expressed at the outer limiting membrane and apical to adherens junctions in the retina (PubMed:15914641).</text>
</comment>
<comment type="developmental stage">
    <text evidence="25">Expressed in the retinal layer of the optic vesicle, and weakly expressed in the retinal pigment epithelium at 12.5 dpc.</text>
</comment>
<comment type="PTM">
    <text evidence="18">Extensively glycosylated.</text>
</comment>
<comment type="disease">
    <text evidence="32 36 39">CRB1 mutations have been found in various retinal dystrophies, chronic and disabling disorders of visual function. They predominantly involve the posterior portion of the ocular fundus, due to degeneration in the sensory layer of the retina, retinal pigment epithelium, Bruch membrane, choroid, or a combination of these tissues. Onset of inherited retinal dystrophies is painless, bilateral and typically progressive. Most people experience gradual peripheral vision loss or tunnel vision, and difficulties with poor illumination and night vision. Central vision is usually unaffected, so the person may still be able to read. However, it can also deteriorate to cause total blindness. Examples of retinal dystrophies are retinitis pigmentosa, Leber congenital amaurosis, cone-rod dystrophy among others.</text>
</comment>
<comment type="disease" evidence="6 8 9 11 13 15 28 29 31 33 35 36 37 38 39">
    <disease id="DI-00979">
        <name>Retinitis pigmentosa 12</name>
        <acronym>RP12</acronym>
        <description>A retinal dystrophy belonging to the group of pigmentary retinopathies. Retinitis pigmentosa is characterized by retinal pigment deposits visible on fundus examination and primary loss of rod photoreceptor cells followed by secondary loss of cone photoreceptors. Patients typically have night vision blindness and loss of midperipheral visual field. As their condition progresses, they lose their far peripheral visual field and eventually central vision as well. RP12 is an autosomal recessive, severe form often manifesting in early childhood. Patients experiment progressive visual field loss with severe visual impairment before the age of twenty. Some patients have a preserved paraarteriolar retinal pigment epithelium (PPRPE) and hypermetropia.</description>
        <dbReference type="MIM" id="600105"/>
    </disease>
    <text>The disease is caused by variants affecting the gene represented in this entry.</text>
</comment>
<comment type="disease" evidence="7 8 10 11 12 13 14 15 17 19 20 22 23 24 26 27 30 33 34 39">
    <disease id="DI-00636">
        <name>Leber congenital amaurosis 8</name>
        <acronym>LCA8</acronym>
        <description>A severe dystrophy of the retina, typically becoming evident in the first years of life. Visual function is usually poor and often accompanied by nystagmus, sluggish or near-absent pupillary responses, photophobia, high hyperopia and keratoconus.</description>
        <dbReference type="MIM" id="613835"/>
    </disease>
    <text>The disease is caused by variants affecting the gene represented in this entry.</text>
</comment>
<comment type="disease" evidence="16">
    <disease id="DI-02166">
        <name>Pigmented paravenous chorioretinal atrophy</name>
        <acronym>PPCRA</acronym>
        <description>Unusual retinal degeneration characterized by accumulation of pigmentation along retinal veins. PPCRA is dominantly inherited, but exhibited variable expressivity. Males are more likely to exhibit a severe phenotype, whereas females may remain virtually asymptomatic even in later years. The PPCRA phenotype is associated with a mutation in CRB1 gene which is likely to affect the structure of the CRB1 protein.</description>
        <dbReference type="MIM" id="172870"/>
    </disease>
    <text>The disease is caused by variants affecting the gene represented in this entry.</text>
</comment>
<comment type="similarity">
    <text evidence="46">Belongs to the Crumbs protein family.</text>
</comment>
<comment type="sequence caution" evidence="46">
    <conflict type="erroneous termination">
        <sequence resource="EMBL-CDS" id="CAE45845"/>
    </conflict>
    <text>Truncated C-terminus.</text>
</comment>